<comment type="function">
    <text evidence="1 2 3 4 40 43 45 48 49 61 62 63 66">Multifunctional redox sensitive protein with various roles in different cellular compartments. In the nucleus is one of the major chromatin-associated non-histone proteins and acts as a DNA chaperone involved in replication, transcription, chromatin remodeling, V(D)J recombination, DNA repair and genome stability (PubMed:33147444). Proposed to be an universal biosensor for nucleic acids. Promotes host inflammatory response to sterile and infectious signals and is involved in the coordination and integration of innate and adaptive immune responses. In the cytoplasm functions as a sensor and/or chaperone for immunogenic nucleic acids implicating the activation of TLR9-mediated immune responses, and mediates autophagy. Acts as a danger-associated molecular pattern (DAMP) molecule that amplifies immune responses during tissue injury (PubMed:27362237). Released to the extracellular environment can bind DNA, nucleosomes, IL-1 beta, CXCL12, AGER isoform 2/sRAGE, lipopolysaccharide (LPS) and lipoteichoic acid (LTA), and activates cells through engagement of multiple surface receptors (PubMed:34743181). In the extracellular compartment fully reduced HMGB1 (released by necrosis) acts as a chemokine, disulfide HMGB1 (actively secreted) as a cytokine, and sulfonyl HMGB1 (released from apoptotic cells) promotes immunological tolerance (PubMed:23446148, PubMed:23519706, PubMed:23994764, PubMed:25048472). Has proangiogdenic activity (By similarity). May be involved in platelet activation (By similarity). Binds to phosphatidylserine and phosphatidylethanolamide (By similarity). Bound to RAGE mediates signaling for neuronal outgrowth (By similarity). May play a role in accumulation of expanded polyglutamine (polyQ) proteins such as huntingtin (HTT) or TBP (PubMed:23303669, PubMed:25549101).</text>
</comment>
<comment type="function">
    <text evidence="1 3 4 12 16 20 27 39 58 59">Nuclear functions are attributed to fully reduced HGMB1. Associates with chromatin and binds DNA with a preference to non-canonical DNA structures such as single-stranded DNA, DNA-containing cruciforms or bent structures, supercoiled DNA and ZDNA. Can bent DNA and enhance DNA flexibility by looping thus providing a mechanism to promote activities on various gene promoters by enhancing transcription factor binding and/or bringing distant regulatory sequences into close proximity (PubMed:20123072). May have an enhancing role in nucleotide excision repair (NER) (By similarity). However, effects in NER using in vitro systems have been reported conflictingly (PubMed:19360789, PubMed:19446504). May be involved in mismatch repair (MMR) and base excision repair (BER) pathways (PubMed:15014079, PubMed:16143102, PubMed:17803946). May be involved in double strand break repair such as non-homologous end joining (NHEJ) (By similarity). Involved in V(D)J recombination by acting as a cofactor of the RAG complex: acts by stimulating cleavage and RAG protein binding at the 23 bp spacer of conserved recombination signal sequences (RSS) (By similarity). In vitro can displace histone H1 from highly bent DNA (By similarity). Can restructure the canonical nucleosome leading to relaxation of structural constraints for transcription factor-binding (By similarity). Enhances binding of sterol regulatory element-binding proteins (SREBPs) such as SREBF1 to their cognate DNA sequences and increases their transcriptional activities (By similarity). Facilitates binding of TP53 to DNA (PubMed:23063560). Proposed to be involved in mitochondrial quality control and autophagy in a transcription-dependent fashion implicating HSPB1; however, this function has been questioned (By similarity). Can modulate the activity of the telomerase complex and may be involved in telomere maintenance (By similarity).</text>
</comment>
<comment type="function">
    <text evidence="3 30 31">In the cytoplasm proposed to dissociate the BECN1:BCL2 complex via competitive interaction with BECN1 leading to autophagy activation (PubMed:20819940). Involved in oxidative stress-mediated autophagy (PubMed:21395369). Can protect BECN1 and ATG5 from calpain-mediated cleavage and thus proposed to control their proautophagic and proapoptotic functions and to regulate the extent and severity of inflammation-associated cellular injury (By similarity). In myeloid cells has a protective role against endotoxemia and bacterial infection by promoting autophagy (By similarity). Involved in endosomal translocation and activation of TLR9 in response to CpG-DNA in macrophages (By similarity).</text>
</comment>
<comment type="function">
    <text evidence="1 3 4 9 13 15 22 23 24 25 26 29 32 33 34 41 42 44 55">In the extracellular compartment (following either active secretion or passive release) involved in regulation of the inflammatory response. Fully reduced HGMB1 (which subsequently gets oxidized after release) in association with CXCL12 mediates the recruitment of inflammatory cells during the initial phase of tissue injury; the CXCL12:HMGB1 complex triggers CXCR4 homodimerization (PubMed:22370717). Induces the migration of monocyte-derived immature dendritic cells and seems to regulate adhesive and migratory functions of neutrophils implicating AGER/RAGE and ITGAM (By similarity). Can bind to various types of DNA and RNA including microbial unmethylated CpG-DNA to enhance the innate immune response to nucleic acids. Proposed to act in promiscuous DNA/RNA sensing which cooperates with subsequent discriminative sensing by specific pattern recognition receptors (By similarity). Promotes extracellular DNA-induced AIM2 inflammasome activation implicating AGER/RAGE (PubMed:24971542). Disulfide HMGB1 binds to transmembrane receptors, such as AGER/RAGE, TLR2, TLR4 and probably TREM1, thus activating their signal transduction pathways. Mediates the release of cytokines/chemokines such as TNF, IL-1, IL-6, IL-8, CCL2, CCL3, CCL4 and CXCL10 (PubMed:12765338, PubMed:18354232, PubMed:19264983, PubMed:20547845, PubMed:24474694). Promotes secretion of interferon-gamma by macrophage-stimulated natural killer (NK) cells in concert with other cytokines like IL-2 or IL-12 (PubMed:15607795). TLR4 is proposed to be the primary receptor promoting macrophage activation and signaling through TLR4 seems to implicate LY96/MD-2 (PubMed:20547845). In bacterial LPS- or LTA-mediated inflammatory responses binds to the endotoxins and transfers them to CD14 for signaling to the respective TLR4:LY96 and TLR2 complexes (PubMed:18354232, PubMed:21660935, PubMed:25660311). Contributes to tumor proliferation by association with ACER/RAGE (By similarity). Can bind to IL1-beta and signals through the IL1R1:IL1RAP receptor complex (PubMed:18250463). Binding to class A CpG activates cytokine production in plasmacytoid dendritic cells implicating TLR9, MYD88 and AGER/RAGE and can activate autoreactive B cells. Via HMGB1-containing chromatin immune complexes may also promote B cell responses to endogenous TLR9 ligands through a B-cell receptor (BCR)-dependent and ACER/RAGE-independent mechanism (By similarity). Inhibits phagocytosis of apoptotic cells by macrophages; the function is dependent on poly-ADP-ribosylation and involves binding to phosphatidylserine on the cell surface of apoptotic cells (By similarity). In adaptive immunity may be involved in enhancing immunity through activation of effector T cells and suppression of regulatory T (TReg) cells (PubMed:15944249, PubMed:22473704). In contrast, without implicating effector or regulatory T-cells, required for tumor infiltration and activation of T-cells expressing the lymphotoxin LTA:LTB heterotrimer thus promoting tumor malignant progression (By similarity). Also reported to limit proliferation of T-cells (By similarity). Released HMGB1:nucleosome complexes formed during apoptosis can signal through TLR2 to induce cytokine production (PubMed:19064698). Involved in induction of immunological tolerance by apoptotic cells; its pro-inflammatory activities when released by apoptotic cells are neutralized by reactive oxygen species (ROS)-dependent oxidation specifically on Cys-106 (PubMed:18631454). During macrophage activation by activated lymphocyte-derived self apoptotic DNA (ALD-DNA) promotes recruitment of ALD-DNA to endosomes (By similarity).</text>
</comment>
<comment type="function">
    <text evidence="48 52">(Microbial infection) Critical for entry of human coronaviruses SARS-CoV and SARS-CoV-2, as well as human coronavirus NL63/HCoV-NL63 (PubMed:33147444). Regulates the expression of the pro-viral genes ACE2 and CTSL through chromatin modulation (PubMed:33147444). Required for SARS-CoV-2 ORF3A-induced reticulophagy which induces endoplasmic reticulum stress and inflammatory responses and facilitates viral infection (PubMed:35239449).</text>
</comment>
<comment type="function">
    <text evidence="35">(Microbial infection) Associates with the influenza A viral protein NP in the nucleus of infected cells, promoting viral growth and enhancing the activity of the viral polymerase.</text>
</comment>
<comment type="function">
    <text evidence="50">(Microbial infection) Promotes Epstein-Barr virus (EBV) latent-to-lytic switch by sustaining the expression of the viral transcription factor BZLF1 that acts as a molecular switch to induce the transition from the latent to the lytic or productive phase of the virus cycle. Mechanistically, participates in EBV reactivation through the NLRP3 inflammasome.</text>
</comment>
<comment type="function">
    <text evidence="51">(Microbial infection) Facilitates dengue virus propagation via interaction with the untranslated regions of viral genome. In turn, this interaction with viral RNA may regulate secondary structure of dengue RNA thus facilitating its recognition by the replication complex.</text>
</comment>
<comment type="subunit">
    <text evidence="3 4 12 14 19 20 21 22 26 27 29 30 33 39 40 41 49">Interacts (fully reduced HMGB1) with CXCL12; probably in a 1:2 ratio involving two molecules of CXCL12, each interacting with one HMG box of HMGB1; inhibited by glycyrrhizin (PubMed:22370717). Associates with the TLR4:LY96 receptor complex (PubMed:20547845). Component of the RAG complex composed of core components RAG1 and RAG2, and associated component HMGB1 or HMGB2 (By similarity). Interacts (in cytoplasm upon starvation) with BECN1; inhibits the interaction of BECN1 and BCL2 leading to promotion of autophagy (PubMed:20819940). Interacts with KPNA1; involved in nuclear import (PubMed:17114460). Interacts with SREBF1, TLR2, TLR4, TLR9, PTPRZ1, APEX1, FEN1, POLB, TERT (By similarity). Interacts with IL1B, AGER, MSH2, XPA, XPC, HNF1A, TP53 (PubMed:15014079, PubMed:18160415, PubMed:18250463, PubMed:19446504, PubMed:23063560, PubMed:24474694). Interacts with CD24; the probable CD24:SIGLEC10 complex is proposed to inhibit HGMB1-mediated tissue damage immune response (PubMed:19264983). Interacts with THBD; prevents HGMB1 interaction with ACER/RAGE and inhibits HGMB1 pro-inflammatory activity (PubMed:15841214). Interacts with HAVCR2; impairs HMGB1 binding to B-DNA and likely HMGB1-mediated innate immune response (By similarity). Interacts with XPO1; mediating nuclear export (By similarity). Interacts with HTT (wild-type and mutant HTT with expanded polyglutamine repeat) (PubMed:23303669). Interacts with receptor RAGE/AGER (PubMed:34743181).</text>
</comment>
<comment type="subunit">
    <text evidence="45">(Microbial infection) Interacts with adenovirus protein pVII; this interaction immobilizes HMGB1 on chromatin, thus preventing its release from cell and subsequent inflammation activation.</text>
</comment>
<comment type="subunit">
    <text evidence="52">(Microbial infection) Interacts with SARS-CoV-2 ORF3A protein; the interaction promotes association of HMGB1 with BECN1, promoting reticulophagy which induces endoplasmic reticulum stress and inflammatory responses and facilitates viral infection.</text>
</comment>
<comment type="subunit">
    <text evidence="35">(Microbial infection) Interacts with influenza A virus protein NP; this interaction promotes viral replication.</text>
</comment>
<comment type="interaction">
    <interactant intactId="EBI-389432">
        <id>P09429</id>
    </interactant>
    <interactant intactId="EBI-1646426">
        <id>Q15109</id>
        <label>AGER</label>
    </interactant>
    <organismsDiffer>false</organismsDiffer>
    <experiments>3</experiments>
</comment>
<comment type="interaction">
    <interactant intactId="EBI-389432">
        <id>P09429</id>
    </interactant>
    <interactant intactId="EBI-741181">
        <id>Q6RW13</id>
        <label>AGTRAP</label>
    </interactant>
    <organismsDiffer>false</organismsDiffer>
    <experiments>3</experiments>
</comment>
<comment type="interaction">
    <interactant intactId="EBI-389432">
        <id>P09429</id>
    </interactant>
    <interactant intactId="EBI-77613">
        <id>P05067</id>
        <label>APP</label>
    </interactant>
    <organismsDiffer>false</organismsDiffer>
    <experiments>3</experiments>
</comment>
<comment type="interaction">
    <interactant intactId="EBI-389432">
        <id>P09429</id>
    </interactant>
    <interactant intactId="EBI-949378">
        <id>Q14457</id>
        <label>BECN1</label>
    </interactant>
    <organismsDiffer>false</organismsDiffer>
    <experiments>2</experiments>
</comment>
<comment type="interaction">
    <interactant intactId="EBI-389432">
        <id>P09429</id>
    </interactant>
    <interactant intactId="EBI-748961">
        <id>O95273</id>
        <label>CCNDBP1</label>
    </interactant>
    <organismsDiffer>false</organismsDiffer>
    <experiments>3</experiments>
</comment>
<comment type="interaction">
    <interactant intactId="EBI-389432">
        <id>P09429</id>
    </interactant>
    <interactant intactId="EBI-351126">
        <id>Q00839</id>
        <label>HNRNPU</label>
    </interactant>
    <organismsDiffer>false</organismsDiffer>
    <experiments>3</experiments>
</comment>
<comment type="interaction">
    <interactant intactId="EBI-389432">
        <id>P09429</id>
    </interactant>
    <interactant intactId="EBI-466029">
        <id>P42858</id>
        <label>HTT</label>
    </interactant>
    <organismsDiffer>false</organismsDiffer>
    <experiments>13</experiments>
</comment>
<comment type="interaction">
    <interactant intactId="EBI-389432">
        <id>P09429</id>
    </interactant>
    <interactant intactId="EBI-297833">
        <id>P08729</id>
        <label>KRT7</label>
    </interactant>
    <organismsDiffer>false</organismsDiffer>
    <experiments>6</experiments>
</comment>
<comment type="interaction">
    <interactant intactId="EBI-389432">
        <id>P09429</id>
    </interactant>
    <interactant intactId="EBI-355888">
        <id>P43246</id>
        <label>MSH2</label>
    </interactant>
    <organismsDiffer>false</organismsDiffer>
    <experiments>2</experiments>
</comment>
<comment type="interaction">
    <interactant intactId="EBI-389432">
        <id>P09429</id>
    </interactant>
    <interactant intactId="EBI-355676">
        <id>P09874</id>
        <label>PARP1</label>
    </interactant>
    <organismsDiffer>false</organismsDiffer>
    <experiments>2</experiments>
</comment>
<comment type="interaction">
    <interactant intactId="EBI-389432">
        <id>P09429</id>
    </interactant>
    <interactant intactId="EBI-926768">
        <id>Q96T23</id>
        <label>RSF1</label>
    </interactant>
    <organismsDiffer>false</organismsDiffer>
    <experiments>3</experiments>
</comment>
<comment type="interaction">
    <interactant intactId="EBI-389432">
        <id>P09429</id>
    </interactant>
    <interactant intactId="EBI-372557">
        <id>P84103</id>
        <label>SRSF3</label>
    </interactant>
    <organismsDiffer>false</organismsDiffer>
    <experiments>3</experiments>
</comment>
<comment type="interaction">
    <interactant intactId="EBI-389432">
        <id>P09429</id>
    </interactant>
    <interactant intactId="EBI-366083">
        <id>P04637</id>
        <label>TP53</label>
    </interactant>
    <organismsDiffer>false</organismsDiffer>
    <experiments>9</experiments>
</comment>
<comment type="interaction">
    <interactant intactId="EBI-389432">
        <id>P09429</id>
    </interactant>
    <interactant intactId="EBI-9995882">
        <id>Q96B54</id>
        <label>ZNF428</label>
    </interactant>
    <organismsDiffer>false</organismsDiffer>
    <experiments>3</experiments>
</comment>
<comment type="subcellular location">
    <subcellularLocation>
        <location evidence="8 19 30 35 37 45 47 48">Nucleus</location>
    </subcellularLocation>
    <subcellularLocation>
        <location evidence="1 4 56">Chromosome</location>
    </subcellularLocation>
    <subcellularLocation>
        <location evidence="7 8 19 30 37 47 48 51">Cytoplasm</location>
    </subcellularLocation>
    <subcellularLocation>
        <location evidence="3 8 10 15 28 37 48">Secreted</location>
    </subcellularLocation>
    <subcellularLocation>
        <location evidence="3 4 7">Cell membrane</location>
        <topology evidence="3 4 7">Peripheral membrane protein</topology>
        <orientation evidence="3 4 7">Extracellular side</orientation>
    </subcellularLocation>
    <subcellularLocation>
        <location evidence="3">Endosome</location>
    </subcellularLocation>
    <subcellularLocation>
        <location evidence="3">Endoplasmic reticulum-Golgi intermediate compartment</location>
    </subcellularLocation>
    <text evidence="3 7 8 10 15 17 19 24 28 30 45 59">In basal state predominantly nuclear. Shuttles between the cytoplasm and the nucleus (PubMed:12231511, PubMed:17114460). Translocates from the nucleus to the cytoplasm upon autophagy stimulation (PubMed:20819940). Release from macrophages in the extracellular milieu requires the activation of NLRC4 or NLRP3 inflammasomes (By similarity). Passively released to the extracellular milieu from necrotic cells by diffusion, involving the fully reduced HGMB1 which subsequently gets oxidized (PubMed:19811284). Also released from apoptotic cells (PubMed:16855214, PubMed:18631454). Active secretion from a variety of immune and non-immune cells such as macrophages, monocytes, neutrophils, dendritic cells and natural killer cells in response to various stimuli such as LPS and cytokines involves a nonconventional secretory process via secretory lysosomes (PubMed:12231511, PubMed:14532127, PubMed:15944249). Secreted by plasma cells in response to LPS (By similarity). Found on the surface of activated platelets (PubMed:11154118). An increased chromatin association is observed when associated with the adenovirus protein pVII (PubMed:27362237).</text>
</comment>
<comment type="subcellular location">
    <subcellularLocation>
        <location evidence="52">Endoplasmic reticulum</location>
    </subcellularLocation>
    <text evidence="52">(Microbial infection) SARS-COV-2 ORF3A promotes HMGB1 translocation from the nucleus to the cytoplasm where it is recruited by and colocalizes with ORF3A at the endoplasmic reticulum.</text>
</comment>
<comment type="tissue specificity">
    <text evidence="7">Ubiquitous. Expressed in platelets (PubMed:11154118).</text>
</comment>
<comment type="induction">
    <text evidence="48">(Microbial infection) Protein levels increase upon infection by human coronavirus SARS-CoV-2.</text>
</comment>
<comment type="domain">
    <text evidence="9 29 41">HMG box 2 mediates pro-inflammatory cytokine-stimulating activity and binding to TLR4 (PubMed:12765338, PubMed:20547845). However, not involved in mediating immunogenic activity in the context of apoptosis-induced immune tolerance (PubMed:24474694).</text>
</comment>
<comment type="domain">
    <text evidence="4 60">The acidic C-terminal domain forms a flexible structure which can reversibly interact intramolecularily with the HMG boxes and modulate binding to DNA and other proteins (PubMed:23063560).</text>
</comment>
<comment type="PTM">
    <text evidence="19">Phosphorylated at serine residues. Phosphorylation in both NLS regions is required for cytoplasmic translocation followed by secretion (PubMed:17114460).</text>
</comment>
<comment type="PTM">
    <text evidence="1 4 36">Acetylated on multiple sites upon stimulation with LPS (PubMed:22801494). Acetylation on lysine residues in the nuclear localization signals (NLS 1 and NLS 2) leads to cytoplasmic localization and subsequent secretion (By similarity). Acetylation on Lys-3 results in preferential binding to DNA ends and impairs DNA bending activity (By similarity).</text>
</comment>
<comment type="PTM">
    <text evidence="18 28 37 65">Reduction/oxidation of cysteine residues Cys-23, Cys-45 and Cys-106 and a possible intramolecular disulfide bond involving Cys-23 and Cys-45 give rise to different redox forms with specific functional activities in various cellular compartments: 1- fully reduced HMGB1 (HMGB1C23hC45hC106h), 2- disulfide HMGB1 (HMGB1C23-C45C106h) and 3- sulfonyl HMGB1 (HMGB1C23soC45soC106so).</text>
</comment>
<comment type="PTM">
    <text evidence="3">Poly-ADP-ribosylated by PARP1 when secreted following stimulation with LPS (By similarity).</text>
</comment>
<comment type="PTM">
    <text evidence="1 41">In vitro cleavage by CASP1 is liberating a HMG box 1-containing peptide which may mediate immunogenic activity; the peptide antagonizes apoptosis-induced immune tolerance (PubMed:24474694). Can be proteolytically cleaved by a thrombin:thrombomodulin complex; reduces binding to heparin and pro-inflammatory activities (By similarity).</text>
</comment>
<comment type="PTM">
    <text evidence="47">Forms covalent cross-links mediated by transglutaminase TGM2, between a glutamine and the epsilon-amino group of a lysine residue, forming homopolymers and heteropolymers.</text>
</comment>
<comment type="miscellaneous">
    <text evidence="11 38 56 57 64 67">Proposed to contribute to the pathogenesis of various chronic inflammatory and autoimmune diseases, and cancer. High serum levels are found in several inflammatory events including sepsis, rheumatoid arthritis, artherosclerosis chronic kidney disease, systemic lupus erythematosus (SLE). Seems to be implicated in other diseases characterized by cell death and damage, including diabetes and Alzheimer's disease. Its nucleosome-associated release during secondary necrosis may play a role in SLE (PubMed:19064698). During chemotherapy can mediate regrowth and metastasis of remaining cells in a AGER/RAGE-dependent manner (PubMed:23040637). Purified HMG box 1 acts as a specific antagonist to HGMB1 pro-inflammatory activities (PubMed:14695889).</text>
</comment>
<comment type="similarity">
    <text evidence="56">Belongs to the HMGB family.</text>
</comment>
<comment type="caution">
    <text evidence="56">Inconsistent experimental results may reflect the use of inconsistently defined redox forms. A recombinant fully reduced form has been used in a number of experiments. However, the redox states of HMGB1 administered in vivo, may interconvert among each other. Purified HMGB1 by itself has only weak pro-inflammatory activity.</text>
</comment>
<organism>
    <name type="scientific">Homo sapiens</name>
    <name type="common">Human</name>
    <dbReference type="NCBI Taxonomy" id="9606"/>
    <lineage>
        <taxon>Eukaryota</taxon>
        <taxon>Metazoa</taxon>
        <taxon>Chordata</taxon>
        <taxon>Craniata</taxon>
        <taxon>Vertebrata</taxon>
        <taxon>Euteleostomi</taxon>
        <taxon>Mammalia</taxon>
        <taxon>Eutheria</taxon>
        <taxon>Euarchontoglires</taxon>
        <taxon>Primates</taxon>
        <taxon>Haplorrhini</taxon>
        <taxon>Catarrhini</taxon>
        <taxon>Hominidae</taxon>
        <taxon>Homo</taxon>
    </lineage>
</organism>
<accession>P09429</accession>
<accession>A5D8W9</accession>
<accession>Q14321</accession>
<accession>Q5T7C3</accession>
<accession>Q6IBE1</accession>
<keyword id="KW-0002">3D-structure</keyword>
<keyword id="KW-0007">Acetylation</keyword>
<keyword id="KW-1064">Adaptive immunity</keyword>
<keyword id="KW-0013">ADP-ribosylation</keyword>
<keyword id="KW-0072">Autophagy</keyword>
<keyword id="KW-1003">Cell membrane</keyword>
<keyword id="KW-0145">Chemotaxis</keyword>
<keyword id="KW-0158">Chromosome</keyword>
<keyword id="KW-0963">Cytoplasm</keyword>
<keyword id="KW-0903">Direct protein sequencing</keyword>
<keyword id="KW-1015">Disulfide bond</keyword>
<keyword id="KW-0227">DNA damage</keyword>
<keyword id="KW-0233">DNA recombination</keyword>
<keyword id="KW-0234">DNA repair</keyword>
<keyword id="KW-0238">DNA-binding</keyword>
<keyword id="KW-0256">Endoplasmic reticulum</keyword>
<keyword id="KW-0967">Endosome</keyword>
<keyword id="KW-0945">Host-virus interaction</keyword>
<keyword id="KW-0391">Immunity</keyword>
<keyword id="KW-0395">Inflammatory response</keyword>
<keyword id="KW-0399">Innate immunity</keyword>
<keyword id="KW-1017">Isopeptide bond</keyword>
<keyword id="KW-0472">Membrane</keyword>
<keyword id="KW-0539">Nucleus</keyword>
<keyword id="KW-0558">Oxidation</keyword>
<keyword id="KW-0597">Phosphoprotein</keyword>
<keyword id="KW-1267">Proteomics identification</keyword>
<keyword id="KW-1185">Reference proteome</keyword>
<keyword id="KW-0677">Repeat</keyword>
<keyword id="KW-0964">Secreted</keyword>
<proteinExistence type="evidence at protein level"/>
<gene>
    <name evidence="68" type="primary">HMGB1</name>
    <name type="synonym">HMG1</name>
</gene>
<feature type="chain" id="PRO_0000048526" description="High mobility group protein B1">
    <location>
        <begin position="1"/>
        <end position="215"/>
    </location>
</feature>
<feature type="DNA-binding region" description="HMG box 1" evidence="5">
    <location>
        <begin position="9"/>
        <end position="79"/>
    </location>
</feature>
<feature type="DNA-binding region" description="HMG box 2" evidence="5">
    <location>
        <begin position="95"/>
        <end position="163"/>
    </location>
</feature>
<feature type="region of interest" description="Sufficient for interaction with HAVCR2" evidence="3">
    <location>
        <begin position="1"/>
        <end position="97"/>
    </location>
</feature>
<feature type="region of interest" description="LPS binding (delipidated)" evidence="32">
    <location>
        <begin position="3"/>
        <end position="15"/>
    </location>
</feature>
<feature type="region of interest" description="Disordered" evidence="6">
    <location>
        <begin position="76"/>
        <end position="95"/>
    </location>
</feature>
<feature type="region of interest" description="LPS binding (Lipid A)" evidence="32">
    <location>
        <begin position="80"/>
        <end position="96"/>
    </location>
</feature>
<feature type="region of interest" description="Cytokine-stimulating activity" evidence="9">
    <location>
        <begin position="89"/>
        <end position="108"/>
    </location>
</feature>
<feature type="region of interest" description="Binding to AGER/RAGE" evidence="4">
    <location>
        <begin position="150"/>
        <end position="183"/>
    </location>
</feature>
<feature type="region of interest" description="Disordered" evidence="6">
    <location>
        <begin position="161"/>
        <end position="215"/>
    </location>
</feature>
<feature type="short sequence motif" description="Nuclear localization signal (NLS) 1" evidence="4">
    <location>
        <begin position="27"/>
        <end position="43"/>
    </location>
</feature>
<feature type="short sequence motif" description="Nuclear localization signal (NLS) 2" evidence="4">
    <location>
        <begin position="178"/>
        <end position="184"/>
    </location>
</feature>
<feature type="compositionally biased region" description="Basic and acidic residues" evidence="6">
    <location>
        <begin position="83"/>
        <end position="94"/>
    </location>
</feature>
<feature type="compositionally biased region" description="Basic and acidic residues" evidence="6">
    <location>
        <begin position="161"/>
        <end position="179"/>
    </location>
</feature>
<feature type="compositionally biased region" description="Acidic residues" evidence="6">
    <location>
        <begin position="187"/>
        <end position="215"/>
    </location>
</feature>
<feature type="binding site" evidence="1">
    <location>
        <begin position="1"/>
        <end position="10"/>
    </location>
    <ligand>
        <name>heparin</name>
        <dbReference type="ChEBI" id="CHEBI:28304"/>
    </ligand>
</feature>
<feature type="site" description="Cleavage; by thrombin:thrombomodulin" evidence="1">
    <location>
        <begin position="10"/>
        <end position="11"/>
    </location>
</feature>
<feature type="site" description="Cleavage; by CASP1" evidence="41">
    <location>
        <begin position="67"/>
        <end position="68"/>
    </location>
</feature>
<feature type="modified residue" description="N6-acetyllysine" evidence="1">
    <location>
        <position position="3"/>
    </location>
</feature>
<feature type="modified residue" description="N6-acetyllysine" evidence="1">
    <location>
        <position position="7"/>
    </location>
</feature>
<feature type="modified residue" description="N6-acetyllysine" evidence="1">
    <location>
        <position position="8"/>
    </location>
</feature>
<feature type="modified residue" description="N6-acetyllysine" evidence="1">
    <location>
        <position position="12"/>
    </location>
</feature>
<feature type="modified residue" description="Cysteine sulfonic acid (-SO3H); alternate" evidence="4">
    <location>
        <position position="23"/>
    </location>
</feature>
<feature type="modified residue" description="N6-acetyllysine" evidence="1">
    <location>
        <position position="28"/>
    </location>
</feature>
<feature type="modified residue" description="N6-acetyllysine" evidence="1">
    <location>
        <position position="29"/>
    </location>
</feature>
<feature type="modified residue" description="N6-acetyllysine" evidence="70">
    <location>
        <position position="30"/>
    </location>
</feature>
<feature type="modified residue" description="Phosphoserine" evidence="69 71 72 73">
    <location>
        <position position="35"/>
    </location>
</feature>
<feature type="modified residue" description="N6-acetyllysine" evidence="3">
    <location>
        <position position="43"/>
    </location>
</feature>
<feature type="modified residue" description="Cysteine sulfonic acid (-SO3H); alternate" evidence="4">
    <location>
        <position position="45"/>
    </location>
</feature>
<feature type="modified residue" description="N6-acetyllysine" evidence="3">
    <location>
        <position position="90"/>
    </location>
</feature>
<feature type="modified residue" description="Phosphoserine" evidence="69">
    <location>
        <position position="100"/>
    </location>
</feature>
<feature type="modified residue" description="Cysteine sulfonic acid (-SO3H)" evidence="4">
    <location>
        <position position="106"/>
    </location>
</feature>
<feature type="modified residue" description="N6-acetyllysine" evidence="1">
    <location>
        <position position="127"/>
    </location>
</feature>
<feature type="modified residue" description="N6-acetyllysine" evidence="1">
    <location>
        <position position="128"/>
    </location>
</feature>
<feature type="modified residue" description="N6-acetyllysine" evidence="3">
    <location>
        <position position="141"/>
    </location>
</feature>
<feature type="modified residue" description="N6-acetyllysine" evidence="1">
    <location>
        <position position="172"/>
    </location>
</feature>
<feature type="modified residue" description="N6-acetyllysine" evidence="1">
    <location>
        <position position="173"/>
    </location>
</feature>
<feature type="modified residue" description="N6-acetyllysine" evidence="1">
    <location>
        <position position="177"/>
    </location>
</feature>
<feature type="modified residue" description="N6-acetyllysine" evidence="1">
    <location>
        <position position="180"/>
    </location>
</feature>
<feature type="modified residue" description="ADP-ribosylserine" evidence="46">
    <location>
        <position position="181"/>
    </location>
</feature>
<feature type="modified residue" description="N6-acetyllysine" evidence="1">
    <location>
        <position position="182"/>
    </location>
</feature>
<feature type="modified residue" description="N6-acetyllysine" evidence="1">
    <location>
        <position position="183"/>
    </location>
</feature>
<feature type="modified residue" description="N6-acetyllysine" evidence="1">
    <location>
        <position position="184"/>
    </location>
</feature>
<feature type="modified residue" description="N6-acetyllysine" evidence="1">
    <location>
        <position position="185"/>
    </location>
</feature>
<feature type="disulfide bond" description="In disulfide HMGB1; alternate" evidence="4">
    <location>
        <begin position="23"/>
        <end position="45"/>
    </location>
</feature>
<feature type="cross-link" description="Isoglutamyl lysine isopeptide (Lys-Gln) (interchain with Q-?)" evidence="47">
    <location>
        <position position="28"/>
    </location>
</feature>
<feature type="cross-link" description="Isoglutamyl lysine isopeptide (Lys-Gln) (interchain with Q-?)" evidence="47">
    <location>
        <position position="43"/>
    </location>
</feature>
<feature type="cross-link" description="Isoglutamyl lysine isopeptide (Lys-Gln) (interchain with Q-?)" evidence="47">
    <location>
        <position position="44"/>
    </location>
</feature>
<feature type="cross-link" description="Isoglutamyl lysine isopeptide (Lys-Gln) (interchain with Q-?)" evidence="47">
    <location>
        <position position="68"/>
    </location>
</feature>
<feature type="cross-link" description="Isoglutamyl lysine isopeptide (Lys-Gln) (interchain with Q-?)" evidence="47">
    <location>
        <position position="180"/>
    </location>
</feature>
<feature type="cross-link" description="Isoglutamyl lysine isopeptide (Lys-Gln) (interchain with Q-?)" evidence="47">
    <location>
        <position position="182"/>
    </location>
</feature>
<feature type="cross-link" description="Isoglutamyl lysine isopeptide (Lys-Gln) (interchain with Q-?)" evidence="47">
    <location>
        <position position="183"/>
    </location>
</feature>
<feature type="cross-link" description="Isoglutamyl lysine isopeptide (Lys-Gln) (interchain with Q-?)" evidence="47">
    <location>
        <position position="184"/>
    </location>
</feature>
<feature type="sequence variant" id="VAR_046451" description="In gastric-carcinoma cell line." evidence="53">
    <original>G</original>
    <variation>R</variation>
    <location>
        <position position="11"/>
    </location>
</feature>
<feature type="sequence variant" id="VAR_046452" description="In gastric-carcinoma cell line." evidence="53">
    <original>A</original>
    <variation>E</variation>
    <location>
        <position position="149"/>
    </location>
</feature>
<feature type="sequence variant" id="VAR_046453" evidence="54">
    <original>E</original>
    <variation>Q</variation>
    <location>
        <position position="156"/>
    </location>
</feature>
<feature type="sequence variant" id="VAR_046454" description="In gastric-carcinoma cell line." evidence="53">
    <original>D</original>
    <variation>G</variation>
    <location>
        <position position="190"/>
    </location>
</feature>
<feature type="mutagenesis site" description="Greatly reduces phosphorylation, nuclear localization; when associated with A-39; A-42; A-46; A-53 and A-181." evidence="19">
    <original>S</original>
    <variation>A</variation>
    <location>
        <position position="35"/>
    </location>
</feature>
<feature type="mutagenesis site" description="Cytoplasmic localization (phosphorylation mimicking); when associated with E-39; E-42; E-46; E-53 and E-181." evidence="19">
    <original>S</original>
    <variation>E</variation>
    <location>
        <position position="35"/>
    </location>
</feature>
<feature type="mutagenesis site" description="Greatly reduces phosphorylation, nuclear localization; when associated with A-35; A-42; A-46; A-53 and A-181." evidence="19">
    <original>S</original>
    <variation>A</variation>
    <location>
        <position position="39"/>
    </location>
</feature>
<feature type="mutagenesis site" description="Cytoplasmic localization (phosphorylation mimicking); when associated with E-35; E-42; E-46; E-53 and E-181." evidence="19">
    <original>S</original>
    <variation>E</variation>
    <location>
        <position position="39"/>
    </location>
</feature>
<feature type="mutagenesis site" description="Greatly reduces phosphorylation, nuclear localization; when associated with A-35; A-39; A-46; A-53 and A-181." evidence="19">
    <original>S</original>
    <variation>A</variation>
    <location>
        <position position="42"/>
    </location>
</feature>
<feature type="mutagenesis site" description="Cytoplasmic localization (phosphorylation mimicking); when associated with E-35; E-39; E-46; E-53 and E-181." evidence="19">
    <original>S</original>
    <variation>E</variation>
    <location>
        <position position="42"/>
    </location>
</feature>
<feature type="mutagenesis site" description="Greatly reduces phosphorylation, nuclear localization; when associated with A-35; A-39; A-42; A-53 and A-181." evidence="19">
    <original>S</original>
    <variation>A</variation>
    <location>
        <position position="46"/>
    </location>
</feature>
<feature type="mutagenesis site" description="Cytoplasmic localization (phosphorylation mimicking); when associated with E-35; E-39; E-42; E-53 and E-181." evidence="19">
    <original>S</original>
    <variation>E</variation>
    <location>
        <position position="46"/>
    </location>
</feature>
<feature type="mutagenesis site" description="Greatly reduces phosphorylation, nuclear localization; when associated with A-35; A-39; A-42; A-46 and A-181." evidence="19">
    <original>S</original>
    <variation>A</variation>
    <location>
        <position position="53"/>
    </location>
</feature>
<feature type="mutagenesis site" description="Cytoplasmic localization (phosphorylation mimicking); when associated with E-35; E-39; E-42; E-46 and E-181." evidence="19">
    <original>S</original>
    <variation>E</variation>
    <location>
        <position position="53"/>
    </location>
</feature>
<feature type="mutagenesis site" description="Abolishes cleavage by CASP1 and impairs ability to antagonize apoptosis-induced immune tolerance." evidence="41">
    <original>D</original>
    <variation>A</variation>
    <location>
        <position position="67"/>
    </location>
</feature>
<feature type="mutagenesis site" description="Inhibits oxidation-dependent inactivation of immunostimmulatory activity in apoptotic cells." evidence="24">
    <original>C</original>
    <variation>S</variation>
    <location>
        <position position="106"/>
    </location>
</feature>
<feature type="mutagenesis site" description="Greatly reduces phosphorylation, nuclear localization; when associated with A-35; A-39; A-42; A-46 and A-53." evidence="19">
    <original>S</original>
    <variation>A</variation>
    <location>
        <position position="181"/>
    </location>
</feature>
<feature type="mutagenesis site" description="Cytoplasmic localization (phosphorylation mimicking); when associated with E-35; E-39; E-42; E-46 and E-53." evidence="19">
    <original>S</original>
    <variation>E</variation>
    <location>
        <position position="181"/>
    </location>
</feature>
<feature type="sequence conflict" description="In Ref. 13; AAI41845." evidence="56" ref="13">
    <original>P</original>
    <variation>H</variation>
    <location>
        <position position="143"/>
    </location>
</feature>
<feature type="sequence conflict" description="In Ref. 8; CAG33144." evidence="56" ref="8">
    <original>E</original>
    <variation>D</variation>
    <location>
        <position position="215"/>
    </location>
</feature>
<feature type="strand" evidence="75">
    <location>
        <begin position="1"/>
        <end position="3"/>
    </location>
</feature>
<feature type="strand" evidence="75">
    <location>
        <begin position="6"/>
        <end position="8"/>
    </location>
</feature>
<feature type="helix" evidence="76">
    <location>
        <begin position="20"/>
        <end position="30"/>
    </location>
</feature>
<feature type="strand" evidence="76">
    <location>
        <begin position="31"/>
        <end position="33"/>
    </location>
</feature>
<feature type="helix" evidence="76">
    <location>
        <begin position="38"/>
        <end position="47"/>
    </location>
</feature>
<feature type="helix" evidence="74">
    <location>
        <begin position="54"/>
        <end position="76"/>
    </location>
</feature>
<feature type="strand" evidence="75">
    <location>
        <begin position="92"/>
        <end position="94"/>
    </location>
</feature>
<feature type="helix" evidence="76">
    <location>
        <begin position="101"/>
        <end position="116"/>
    </location>
</feature>
<feature type="strand" evidence="75">
    <location>
        <begin position="118"/>
        <end position="120"/>
    </location>
</feature>
<feature type="helix" evidence="76">
    <location>
        <begin position="122"/>
        <end position="135"/>
    </location>
</feature>
<feature type="helix" evidence="75">
    <location>
        <begin position="138"/>
        <end position="140"/>
    </location>
</feature>
<feature type="helix" evidence="76">
    <location>
        <begin position="142"/>
        <end position="157"/>
    </location>
</feature>
<name>HMGB1_HUMAN</name>
<dbReference type="EMBL" id="X12597">
    <property type="protein sequence ID" value="CAA31110.1"/>
    <property type="molecule type" value="mRNA"/>
</dbReference>
<dbReference type="EMBL" id="U51677">
    <property type="protein sequence ID" value="AAB08987.1"/>
    <property type="molecule type" value="Genomic_DNA"/>
</dbReference>
<dbReference type="EMBL" id="D63874">
    <property type="protein sequence ID" value="BAA09924.1"/>
    <property type="molecule type" value="mRNA"/>
</dbReference>
<dbReference type="EMBL" id="EF157968">
    <property type="protein sequence ID" value="ABM47301.1"/>
    <property type="molecule type" value="Genomic_DNA"/>
</dbReference>
<dbReference type="EMBL" id="AY377859">
    <property type="protein sequence ID" value="AAQ91389.1"/>
    <property type="molecule type" value="mRNA"/>
</dbReference>
<dbReference type="EMBL" id="AK291494">
    <property type="protein sequence ID" value="BAF84183.1"/>
    <property type="molecule type" value="mRNA"/>
</dbReference>
<dbReference type="EMBL" id="AK122825">
    <property type="protein sequence ID" value="BAG53745.1"/>
    <property type="molecule type" value="mRNA"/>
</dbReference>
<dbReference type="EMBL" id="CR749614">
    <property type="protein sequence ID" value="CAH18408.1"/>
    <property type="molecule type" value="mRNA"/>
</dbReference>
<dbReference type="EMBL" id="CR456863">
    <property type="protein sequence ID" value="CAG33144.1"/>
    <property type="molecule type" value="mRNA"/>
</dbReference>
<dbReference type="EMBL" id="BT006940">
    <property type="protein sequence ID" value="AAP35586.1"/>
    <property type="molecule type" value="mRNA"/>
</dbReference>
<dbReference type="EMBL" id="BT020159">
    <property type="protein sequence ID" value="AAV38961.1"/>
    <property type="molecule type" value="mRNA"/>
</dbReference>
<dbReference type="EMBL" id="EU012027">
    <property type="protein sequence ID" value="ABS29271.1"/>
    <property type="molecule type" value="Genomic_DNA"/>
</dbReference>
<dbReference type="EMBL" id="AL353648">
    <property type="status" value="NOT_ANNOTATED_CDS"/>
    <property type="molecule type" value="Genomic_DNA"/>
</dbReference>
<dbReference type="EMBL" id="CH471075">
    <property type="protein sequence ID" value="EAX08457.1"/>
    <property type="molecule type" value="Genomic_DNA"/>
</dbReference>
<dbReference type="EMBL" id="BC003378">
    <property type="protein sequence ID" value="AAH03378.1"/>
    <property type="molecule type" value="mRNA"/>
</dbReference>
<dbReference type="EMBL" id="BC030981">
    <property type="protein sequence ID" value="AAH30981.1"/>
    <property type="molecule type" value="mRNA"/>
</dbReference>
<dbReference type="EMBL" id="BC066889">
    <property type="protein sequence ID" value="AAH66889.1"/>
    <property type="molecule type" value="mRNA"/>
</dbReference>
<dbReference type="EMBL" id="BC067732">
    <property type="protein sequence ID" value="AAH67732.1"/>
    <property type="molecule type" value="mRNA"/>
</dbReference>
<dbReference type="EMBL" id="BC141844">
    <property type="protein sequence ID" value="AAI41845.1"/>
    <property type="molecule type" value="mRNA"/>
</dbReference>
<dbReference type="CCDS" id="CCDS9335.1"/>
<dbReference type="PIR" id="S02826">
    <property type="entry name" value="S02826"/>
</dbReference>
<dbReference type="RefSeq" id="NP_001300821.1">
    <property type="nucleotide sequence ID" value="NM_001313892.2"/>
</dbReference>
<dbReference type="RefSeq" id="NP_001300822.1">
    <property type="nucleotide sequence ID" value="NM_001313893.1"/>
</dbReference>
<dbReference type="RefSeq" id="NP_001357269.1">
    <property type="nucleotide sequence ID" value="NM_001370340.1"/>
</dbReference>
<dbReference type="RefSeq" id="NP_001357270.1">
    <property type="nucleotide sequence ID" value="NM_001370341.1"/>
</dbReference>
<dbReference type="RefSeq" id="NP_002119.1">
    <property type="nucleotide sequence ID" value="NM_002128.7"/>
</dbReference>
<dbReference type="RefSeq" id="XP_024305109.1">
    <property type="nucleotide sequence ID" value="XM_024449341.2"/>
</dbReference>
<dbReference type="RefSeq" id="XP_054230460.1">
    <property type="nucleotide sequence ID" value="XM_054374485.1"/>
</dbReference>
<dbReference type="PDB" id="2LY4">
    <property type="method" value="NMR"/>
    <property type="chains" value="A=2-84"/>
</dbReference>
<dbReference type="PDB" id="2RTU">
    <property type="method" value="NMR"/>
    <property type="chains" value="A=1-84"/>
</dbReference>
<dbReference type="PDB" id="2YRQ">
    <property type="method" value="NMR"/>
    <property type="chains" value="A=1-166"/>
</dbReference>
<dbReference type="PDB" id="6CG0">
    <property type="method" value="EM"/>
    <property type="resolution" value="3.17 A"/>
    <property type="chains" value="N=15-140"/>
</dbReference>
<dbReference type="PDB" id="6CIJ">
    <property type="method" value="EM"/>
    <property type="resolution" value="3.90 A"/>
    <property type="chains" value="N=1-163"/>
</dbReference>
<dbReference type="PDB" id="6CIK">
    <property type="method" value="X-ray"/>
    <property type="resolution" value="3.15 A"/>
    <property type="chains" value="N=1-163"/>
</dbReference>
<dbReference type="PDB" id="6CIL">
    <property type="method" value="X-ray"/>
    <property type="resolution" value="4.15 A"/>
    <property type="chains" value="N=1-163"/>
</dbReference>
<dbReference type="PDB" id="6CIM">
    <property type="method" value="X-ray"/>
    <property type="resolution" value="3.60 A"/>
    <property type="chains" value="N=1-163"/>
</dbReference>
<dbReference type="PDB" id="6OEM">
    <property type="method" value="EM"/>
    <property type="resolution" value="3.60 A"/>
    <property type="chains" value="H/N=15-155"/>
</dbReference>
<dbReference type="PDB" id="6OEN">
    <property type="method" value="EM"/>
    <property type="resolution" value="4.30 A"/>
    <property type="chains" value="H/N=1-163"/>
</dbReference>
<dbReference type="PDB" id="6OEO">
    <property type="method" value="EM"/>
    <property type="resolution" value="3.69 A"/>
    <property type="chains" value="N=1-163"/>
</dbReference>
<dbReference type="PDB" id="8I9M">
    <property type="method" value="EM"/>
    <property type="resolution" value="5.19 A"/>
    <property type="chains" value="A=89-163"/>
</dbReference>
<dbReference type="PDBsum" id="2LY4"/>
<dbReference type="PDBsum" id="2RTU"/>
<dbReference type="PDBsum" id="2YRQ"/>
<dbReference type="PDBsum" id="6CG0"/>
<dbReference type="PDBsum" id="6CIJ"/>
<dbReference type="PDBsum" id="6CIK"/>
<dbReference type="PDBsum" id="6CIL"/>
<dbReference type="PDBsum" id="6CIM"/>
<dbReference type="PDBsum" id="6OEM"/>
<dbReference type="PDBsum" id="6OEN"/>
<dbReference type="PDBsum" id="6OEO"/>
<dbReference type="PDBsum" id="8I9M"/>
<dbReference type="BMRB" id="P09429"/>
<dbReference type="EMDB" id="EMD-20030"/>
<dbReference type="EMDB" id="EMD-20031"/>
<dbReference type="EMDB" id="EMD-20032"/>
<dbReference type="EMDB" id="EMD-35276"/>
<dbReference type="EMDB" id="EMD-7470"/>
<dbReference type="EMDB" id="EMD-7480"/>
<dbReference type="PCDDB" id="P09429"/>
<dbReference type="SMR" id="P09429"/>
<dbReference type="BioGRID" id="109389">
    <property type="interactions" value="477"/>
</dbReference>
<dbReference type="CORUM" id="P09429"/>
<dbReference type="DIP" id="DIP-24195N"/>
<dbReference type="FunCoup" id="P09429">
    <property type="interactions" value="1876"/>
</dbReference>
<dbReference type="IntAct" id="P09429">
    <property type="interactions" value="277"/>
</dbReference>
<dbReference type="MINT" id="P09429"/>
<dbReference type="STRING" id="9606.ENSP00000345347"/>
<dbReference type="BindingDB" id="P09429"/>
<dbReference type="ChEMBL" id="CHEMBL2311236"/>
<dbReference type="DrugBank" id="DB00608">
    <property type="generic name" value="Chloroquine"/>
</dbReference>
<dbReference type="DrugBank" id="DB05869">
    <property type="generic name" value="Ethyl pyruvate"/>
</dbReference>
<dbReference type="DrugCentral" id="P09429"/>
<dbReference type="GuidetoPHARMACOLOGY" id="3279"/>
<dbReference type="MoonProt" id="P09429"/>
<dbReference type="GlyCosmos" id="P09429">
    <property type="glycosylation" value="2 sites, 1 glycan"/>
</dbReference>
<dbReference type="GlyGen" id="P09429">
    <property type="glycosylation" value="8 sites, 3 N-linked glycans (2 sites), 1 O-linked glycan (3 sites)"/>
</dbReference>
<dbReference type="iPTMnet" id="P09429"/>
<dbReference type="MetOSite" id="P09429"/>
<dbReference type="PhosphoSitePlus" id="P09429"/>
<dbReference type="SwissPalm" id="P09429"/>
<dbReference type="BioMuta" id="HMGB1"/>
<dbReference type="DMDM" id="123369"/>
<dbReference type="jPOST" id="P09429"/>
<dbReference type="MassIVE" id="P09429"/>
<dbReference type="PaxDb" id="9606-ENSP00000345347"/>
<dbReference type="PeptideAtlas" id="P09429"/>
<dbReference type="ProteomicsDB" id="52217"/>
<dbReference type="Pumba" id="P09429"/>
<dbReference type="TopDownProteomics" id="P09429"/>
<dbReference type="ABCD" id="P09429">
    <property type="antibodies" value="24 sequenced antibodies"/>
</dbReference>
<dbReference type="Antibodypedia" id="3132">
    <property type="antibodies" value="1692 antibodies from 47 providers"/>
</dbReference>
<dbReference type="CPTC" id="P09429">
    <property type="antibodies" value="1 antibody"/>
</dbReference>
<dbReference type="DNASU" id="3146"/>
<dbReference type="Ensembl" id="ENST00000339872.8">
    <property type="protein sequence ID" value="ENSP00000343040.4"/>
    <property type="gene ID" value="ENSG00000189403.15"/>
</dbReference>
<dbReference type="Ensembl" id="ENST00000341423.10">
    <property type="protein sequence ID" value="ENSP00000345347.5"/>
    <property type="gene ID" value="ENSG00000189403.15"/>
</dbReference>
<dbReference type="Ensembl" id="ENST00000399494.5">
    <property type="protein sequence ID" value="ENSP00000382417.1"/>
    <property type="gene ID" value="ENSG00000189403.15"/>
</dbReference>
<dbReference type="Ensembl" id="ENST00000405805.5">
    <property type="protein sequence ID" value="ENSP00000384678.1"/>
    <property type="gene ID" value="ENSG00000189403.15"/>
</dbReference>
<dbReference type="GeneID" id="3146"/>
<dbReference type="KEGG" id="hsa:3146"/>
<dbReference type="MANE-Select" id="ENST00000341423.10">
    <property type="protein sequence ID" value="ENSP00000345347.5"/>
    <property type="RefSeq nucleotide sequence ID" value="NM_002128.7"/>
    <property type="RefSeq protein sequence ID" value="NP_002119.1"/>
</dbReference>
<dbReference type="UCSC" id="uc001usx.5">
    <property type="organism name" value="human"/>
</dbReference>
<dbReference type="AGR" id="HGNC:4983"/>
<dbReference type="CTD" id="3146"/>
<dbReference type="DisGeNET" id="3146"/>
<dbReference type="GeneCards" id="HMGB1"/>
<dbReference type="HGNC" id="HGNC:4983">
    <property type="gene designation" value="HMGB1"/>
</dbReference>
<dbReference type="HPA" id="ENSG00000189403">
    <property type="expression patterns" value="Low tissue specificity"/>
</dbReference>
<dbReference type="MalaCards" id="HMGB1"/>
<dbReference type="MIM" id="163905">
    <property type="type" value="gene"/>
</dbReference>
<dbReference type="neXtProt" id="NX_P09429"/>
<dbReference type="OpenTargets" id="ENSG00000189403"/>
<dbReference type="PharmGKB" id="PA188"/>
<dbReference type="VEuPathDB" id="HostDB:ENSG00000189403"/>
<dbReference type="eggNOG" id="KOG0381">
    <property type="taxonomic scope" value="Eukaryota"/>
</dbReference>
<dbReference type="GeneTree" id="ENSGT00950000183120"/>
<dbReference type="InParanoid" id="P09429"/>
<dbReference type="OMA" id="PHSANEV"/>
<dbReference type="OrthoDB" id="9484645at2759"/>
<dbReference type="PAN-GO" id="P09429">
    <property type="GO annotations" value="2 GO annotations based on evolutionary models"/>
</dbReference>
<dbReference type="PhylomeDB" id="P09429"/>
<dbReference type="TreeFam" id="TF105371"/>
<dbReference type="PathwayCommons" id="P09429"/>
<dbReference type="Reactome" id="R-HSA-1236974">
    <property type="pathway name" value="ER-Phagosome pathway"/>
</dbReference>
<dbReference type="Reactome" id="R-HSA-140342">
    <property type="pathway name" value="Apoptosis induced DNA fragmentation"/>
</dbReference>
<dbReference type="Reactome" id="R-HSA-166058">
    <property type="pathway name" value="MyD88:MAL(TIRAP) cascade initiated on plasma membrane"/>
</dbReference>
<dbReference type="Reactome" id="R-HSA-445989">
    <property type="pathway name" value="TAK1-dependent IKK and NF-kappa-B activation"/>
</dbReference>
<dbReference type="Reactome" id="R-HSA-5602498">
    <property type="pathway name" value="MyD88 deficiency (TLR2/4)"/>
</dbReference>
<dbReference type="Reactome" id="R-HSA-5603041">
    <property type="pathway name" value="IRAK4 deficiency (TLR2/4)"/>
</dbReference>
<dbReference type="Reactome" id="R-HSA-5620971">
    <property type="pathway name" value="Pyroptosis"/>
</dbReference>
<dbReference type="Reactome" id="R-HSA-5686938">
    <property type="pathway name" value="Regulation of TLR by endogenous ligand"/>
</dbReference>
<dbReference type="Reactome" id="R-HSA-6798695">
    <property type="pathway name" value="Neutrophil degranulation"/>
</dbReference>
<dbReference type="Reactome" id="R-HSA-879415">
    <property type="pathway name" value="Advanced glycosylation endproduct receptor signaling"/>
</dbReference>
<dbReference type="Reactome" id="R-HSA-933542">
    <property type="pathway name" value="TRAF6 mediated NF-kB activation"/>
</dbReference>
<dbReference type="SignaLink" id="P09429"/>
<dbReference type="SIGNOR" id="P09429"/>
<dbReference type="BioGRID-ORCS" id="3146">
    <property type="hits" value="313 hits in 1115 CRISPR screens"/>
</dbReference>
<dbReference type="CD-CODE" id="91857CE7">
    <property type="entry name" value="Nucleolus"/>
</dbReference>
<dbReference type="ChiTaRS" id="HMGB1">
    <property type="organism name" value="human"/>
</dbReference>
<dbReference type="EvolutionaryTrace" id="P09429"/>
<dbReference type="GeneWiki" id="HMGB1"/>
<dbReference type="GenomeRNAi" id="3146"/>
<dbReference type="Pharos" id="P09429">
    <property type="development level" value="Tchem"/>
</dbReference>
<dbReference type="PRO" id="PR:P09429"/>
<dbReference type="Proteomes" id="UP000005640">
    <property type="component" value="Chromosome 13"/>
</dbReference>
<dbReference type="RNAct" id="P09429">
    <property type="molecule type" value="protein"/>
</dbReference>
<dbReference type="Bgee" id="ENSG00000189403">
    <property type="expression patterns" value="Expressed in ventricular zone and 181 other cell types or tissues"/>
</dbReference>
<dbReference type="ExpressionAtlas" id="P09429">
    <property type="expression patterns" value="baseline and differential"/>
</dbReference>
<dbReference type="GO" id="GO:0035868">
    <property type="term" value="C:alphav-beta3 integrin-HMGB1 complex"/>
    <property type="evidence" value="ECO:0000314"/>
    <property type="project" value="BHF-UCL"/>
</dbReference>
<dbReference type="GO" id="GO:0009986">
    <property type="term" value="C:cell surface"/>
    <property type="evidence" value="ECO:0000314"/>
    <property type="project" value="UniProtKB"/>
</dbReference>
<dbReference type="GO" id="GO:0000793">
    <property type="term" value="C:condensed chromosome"/>
    <property type="evidence" value="ECO:0000314"/>
    <property type="project" value="UniProtKB"/>
</dbReference>
<dbReference type="GO" id="GO:0005769">
    <property type="term" value="C:early endosome"/>
    <property type="evidence" value="ECO:0007669"/>
    <property type="project" value="Ensembl"/>
</dbReference>
<dbReference type="GO" id="GO:0005783">
    <property type="term" value="C:endoplasmic reticulum"/>
    <property type="evidence" value="ECO:0000314"/>
    <property type="project" value="UniProtKB"/>
</dbReference>
<dbReference type="GO" id="GO:0005793">
    <property type="term" value="C:endoplasmic reticulum-Golgi intermediate compartment"/>
    <property type="evidence" value="ECO:0007669"/>
    <property type="project" value="UniProtKB-SubCell"/>
</dbReference>
<dbReference type="GO" id="GO:0005576">
    <property type="term" value="C:extracellular region"/>
    <property type="evidence" value="ECO:0000304"/>
    <property type="project" value="Reactome"/>
</dbReference>
<dbReference type="GO" id="GO:0005615">
    <property type="term" value="C:extracellular space"/>
    <property type="evidence" value="ECO:0000314"/>
    <property type="project" value="UniProtKB"/>
</dbReference>
<dbReference type="GO" id="GO:1904813">
    <property type="term" value="C:ficolin-1-rich granule lumen"/>
    <property type="evidence" value="ECO:0000304"/>
    <property type="project" value="Reactome"/>
</dbReference>
<dbReference type="GO" id="GO:0043005">
    <property type="term" value="C:neuron projection"/>
    <property type="evidence" value="ECO:0007669"/>
    <property type="project" value="Ensembl"/>
</dbReference>
<dbReference type="GO" id="GO:0005654">
    <property type="term" value="C:nucleoplasm"/>
    <property type="evidence" value="ECO:0000304"/>
    <property type="project" value="Reactome"/>
</dbReference>
<dbReference type="GO" id="GO:0005634">
    <property type="term" value="C:nucleus"/>
    <property type="evidence" value="ECO:0000314"/>
    <property type="project" value="UniProtKB"/>
</dbReference>
<dbReference type="GO" id="GO:0034774">
    <property type="term" value="C:secretory granule lumen"/>
    <property type="evidence" value="ECO:0000304"/>
    <property type="project" value="Reactome"/>
</dbReference>
<dbReference type="GO" id="GO:0017053">
    <property type="term" value="C:transcription repressor complex"/>
    <property type="evidence" value="ECO:0000314"/>
    <property type="project" value="UniProtKB"/>
</dbReference>
<dbReference type="GO" id="GO:0000405">
    <property type="term" value="F:bubble DNA binding"/>
    <property type="evidence" value="ECO:0000250"/>
    <property type="project" value="AgBase"/>
</dbReference>
<dbReference type="GO" id="GO:0019958">
    <property type="term" value="F:C-X-C chemokine binding"/>
    <property type="evidence" value="ECO:0000314"/>
    <property type="project" value="UniProtKB"/>
</dbReference>
<dbReference type="GO" id="GO:0010858">
    <property type="term" value="F:calcium-dependent protein kinase regulator activity"/>
    <property type="evidence" value="ECO:0007669"/>
    <property type="project" value="Ensembl"/>
</dbReference>
<dbReference type="GO" id="GO:0042056">
    <property type="term" value="F:chemoattractant activity"/>
    <property type="evidence" value="ECO:0000250"/>
    <property type="project" value="UniProtKB"/>
</dbReference>
<dbReference type="GO" id="GO:0005125">
    <property type="term" value="F:cytokine activity"/>
    <property type="evidence" value="ECO:0000250"/>
    <property type="project" value="UniProtKB"/>
</dbReference>
<dbReference type="GO" id="GO:0003684">
    <property type="term" value="F:damaged DNA binding"/>
    <property type="evidence" value="ECO:0000314"/>
    <property type="project" value="UniProtKB"/>
</dbReference>
<dbReference type="GO" id="GO:0008301">
    <property type="term" value="F:DNA binding, bending"/>
    <property type="evidence" value="ECO:0000315"/>
    <property type="project" value="UniProtKB"/>
</dbReference>
<dbReference type="GO" id="GO:0070182">
    <property type="term" value="F:DNA polymerase binding"/>
    <property type="evidence" value="ECO:0000314"/>
    <property type="project" value="UniProtKB"/>
</dbReference>
<dbReference type="GO" id="GO:0140297">
    <property type="term" value="F:DNA-binding transcription factor binding"/>
    <property type="evidence" value="ECO:0000353"/>
    <property type="project" value="UniProtKB"/>
</dbReference>
<dbReference type="GO" id="GO:0003690">
    <property type="term" value="F:double-stranded DNA binding"/>
    <property type="evidence" value="ECO:0000250"/>
    <property type="project" value="UniProtKB"/>
</dbReference>
<dbReference type="GO" id="GO:0003725">
    <property type="term" value="F:double-stranded RNA binding"/>
    <property type="evidence" value="ECO:0007669"/>
    <property type="project" value="Ensembl"/>
</dbReference>
<dbReference type="GO" id="GO:0000400">
    <property type="term" value="F:four-way junction DNA binding"/>
    <property type="evidence" value="ECO:0000250"/>
    <property type="project" value="AgBase"/>
</dbReference>
<dbReference type="GO" id="GO:0005178">
    <property type="term" value="F:integrin binding"/>
    <property type="evidence" value="ECO:0000314"/>
    <property type="project" value="BHF-UCL"/>
</dbReference>
<dbReference type="GO" id="GO:0001530">
    <property type="term" value="F:lipopolysaccharide binding"/>
    <property type="evidence" value="ECO:0000314"/>
    <property type="project" value="UniProtKB"/>
</dbReference>
<dbReference type="GO" id="GO:0016829">
    <property type="term" value="F:lyase activity"/>
    <property type="evidence" value="ECO:0000314"/>
    <property type="project" value="UniProtKB"/>
</dbReference>
<dbReference type="GO" id="GO:0001786">
    <property type="term" value="F:phosphatidylserine binding"/>
    <property type="evidence" value="ECO:0000314"/>
    <property type="project" value="UniProtKB"/>
</dbReference>
<dbReference type="GO" id="GO:0030295">
    <property type="term" value="F:protein kinase activator activity"/>
    <property type="evidence" value="ECO:0007669"/>
    <property type="project" value="Ensembl"/>
</dbReference>
<dbReference type="GO" id="GO:0050786">
    <property type="term" value="F:RAGE receptor binding"/>
    <property type="evidence" value="ECO:0000250"/>
    <property type="project" value="UniProtKB"/>
</dbReference>
<dbReference type="GO" id="GO:0048018">
    <property type="term" value="F:receptor ligand activity"/>
    <property type="evidence" value="ECO:0000314"/>
    <property type="project" value="UniProt"/>
</dbReference>
<dbReference type="GO" id="GO:0003723">
    <property type="term" value="F:RNA binding"/>
    <property type="evidence" value="ECO:0007005"/>
    <property type="project" value="UniProtKB"/>
</dbReference>
<dbReference type="GO" id="GO:0061629">
    <property type="term" value="F:RNA polymerase II-specific DNA-binding transcription factor binding"/>
    <property type="evidence" value="ECO:0000353"/>
    <property type="project" value="UniProtKB"/>
</dbReference>
<dbReference type="GO" id="GO:0003697">
    <property type="term" value="F:single-stranded DNA binding"/>
    <property type="evidence" value="ECO:0000250"/>
    <property type="project" value="UniProtKB"/>
</dbReference>
<dbReference type="GO" id="GO:0003727">
    <property type="term" value="F:single-stranded RNA binding"/>
    <property type="evidence" value="ECO:0007669"/>
    <property type="project" value="Ensembl"/>
</dbReference>
<dbReference type="GO" id="GO:0097100">
    <property type="term" value="F:supercoiled DNA binding"/>
    <property type="evidence" value="ECO:0000250"/>
    <property type="project" value="AgBase"/>
</dbReference>
<dbReference type="GO" id="GO:0000976">
    <property type="term" value="F:transcription cis-regulatory region binding"/>
    <property type="evidence" value="ECO:0000314"/>
    <property type="project" value="UniProtKB"/>
</dbReference>
<dbReference type="GO" id="GO:0003713">
    <property type="term" value="F:transcription coactivator activity"/>
    <property type="evidence" value="ECO:0000314"/>
    <property type="project" value="UniProtKB"/>
</dbReference>
<dbReference type="GO" id="GO:0003714">
    <property type="term" value="F:transcription corepressor activity"/>
    <property type="evidence" value="ECO:0000314"/>
    <property type="project" value="UniProtKB"/>
</dbReference>
<dbReference type="GO" id="GO:0002218">
    <property type="term" value="P:activation of innate immune response"/>
    <property type="evidence" value="ECO:0000314"/>
    <property type="project" value="UniProtKB"/>
</dbReference>
<dbReference type="GO" id="GO:0043277">
    <property type="term" value="P:apoptotic cell clearance"/>
    <property type="evidence" value="ECO:0000314"/>
    <property type="project" value="UniProtKB"/>
</dbReference>
<dbReference type="GO" id="GO:0006914">
    <property type="term" value="P:autophagy"/>
    <property type="evidence" value="ECO:0007669"/>
    <property type="project" value="UniProtKB-KW"/>
</dbReference>
<dbReference type="GO" id="GO:0006284">
    <property type="term" value="P:base-excision repair"/>
    <property type="evidence" value="ECO:0007669"/>
    <property type="project" value="Ensembl"/>
</dbReference>
<dbReference type="GO" id="GO:0098761">
    <property type="term" value="P:cellular response to interleukin-7"/>
    <property type="evidence" value="ECO:0007669"/>
    <property type="project" value="Ensembl"/>
</dbReference>
<dbReference type="GO" id="GO:0071222">
    <property type="term" value="P:cellular response to lipopolysaccharide"/>
    <property type="evidence" value="ECO:0000250"/>
    <property type="project" value="ARUK-UCL"/>
</dbReference>
<dbReference type="GO" id="GO:0002407">
    <property type="term" value="P:dendritic cell chemotaxis"/>
    <property type="evidence" value="ECO:0000250"/>
    <property type="project" value="UniProtKB"/>
</dbReference>
<dbReference type="GO" id="GO:0032392">
    <property type="term" value="P:DNA geometric change"/>
    <property type="evidence" value="ECO:0000250"/>
    <property type="project" value="AgBase"/>
</dbReference>
<dbReference type="GO" id="GO:0006310">
    <property type="term" value="P:DNA recombination"/>
    <property type="evidence" value="ECO:0000250"/>
    <property type="project" value="UniProtKB"/>
</dbReference>
<dbReference type="GO" id="GO:0006265">
    <property type="term" value="P:DNA topological change"/>
    <property type="evidence" value="ECO:0000250"/>
    <property type="project" value="UniProtKB"/>
</dbReference>
<dbReference type="GO" id="GO:0006302">
    <property type="term" value="P:double-strand break repair"/>
    <property type="evidence" value="ECO:0000250"/>
    <property type="project" value="UniProtKB"/>
</dbReference>
<dbReference type="GO" id="GO:0006303">
    <property type="term" value="P:double-strand break repair via nonhomologous end joining"/>
    <property type="evidence" value="ECO:0000250"/>
    <property type="project" value="UniProtKB"/>
</dbReference>
<dbReference type="GO" id="GO:0035767">
    <property type="term" value="P:endothelial cell chemotaxis"/>
    <property type="evidence" value="ECO:0007669"/>
    <property type="project" value="Ensembl"/>
</dbReference>
<dbReference type="GO" id="GO:0001935">
    <property type="term" value="P:endothelial cell proliferation"/>
    <property type="evidence" value="ECO:0007669"/>
    <property type="project" value="Ensembl"/>
</dbReference>
<dbReference type="GO" id="GO:0001654">
    <property type="term" value="P:eye development"/>
    <property type="evidence" value="ECO:0007669"/>
    <property type="project" value="Ensembl"/>
</dbReference>
<dbReference type="GO" id="GO:0005980">
    <property type="term" value="P:glycogen catabolic process"/>
    <property type="evidence" value="ECO:0007669"/>
    <property type="project" value="Ensembl"/>
</dbReference>
<dbReference type="GO" id="GO:0031507">
    <property type="term" value="P:heterochromatin formation"/>
    <property type="evidence" value="ECO:0000316"/>
    <property type="project" value="GO_Central"/>
</dbReference>
<dbReference type="GO" id="GO:0006954">
    <property type="term" value="P:inflammatory response"/>
    <property type="evidence" value="ECO:0000314"/>
    <property type="project" value="CACAO"/>
</dbReference>
<dbReference type="GO" id="GO:0002437">
    <property type="term" value="P:inflammatory response to antigenic stimulus"/>
    <property type="evidence" value="ECO:0000270"/>
    <property type="project" value="UniProtKB"/>
</dbReference>
<dbReference type="GO" id="GO:0045087">
    <property type="term" value="P:innate immune response"/>
    <property type="evidence" value="ECO:0007669"/>
    <property type="project" value="UniProtKB-KW"/>
</dbReference>
<dbReference type="GO" id="GO:0030324">
    <property type="term" value="P:lung development"/>
    <property type="evidence" value="ECO:0007669"/>
    <property type="project" value="Ensembl"/>
</dbReference>
<dbReference type="GO" id="GO:0002281">
    <property type="term" value="P:macrophage activation involved in immune response"/>
    <property type="evidence" value="ECO:0007669"/>
    <property type="project" value="Ensembl"/>
</dbReference>
<dbReference type="GO" id="GO:0030099">
    <property type="term" value="P:myeloid cell differentiation"/>
    <property type="evidence" value="ECO:0007669"/>
    <property type="project" value="Ensembl"/>
</dbReference>
<dbReference type="GO" id="GO:0001773">
    <property type="term" value="P:myeloid dendritic cell activation"/>
    <property type="evidence" value="ECO:0000250"/>
    <property type="project" value="UniProtKB"/>
</dbReference>
<dbReference type="GO" id="GO:0002318">
    <property type="term" value="P:myeloid progenitor cell differentiation"/>
    <property type="evidence" value="ECO:0007669"/>
    <property type="project" value="Ensembl"/>
</dbReference>
<dbReference type="GO" id="GO:2000426">
    <property type="term" value="P:negative regulation of apoptotic cell clearance"/>
    <property type="evidence" value="ECO:0000314"/>
    <property type="project" value="BHF-UCL"/>
</dbReference>
<dbReference type="GO" id="GO:0043537">
    <property type="term" value="P:negative regulation of blood vessel endothelial cell migration"/>
    <property type="evidence" value="ECO:0000314"/>
    <property type="project" value="CACAO"/>
</dbReference>
<dbReference type="GO" id="GO:0043371">
    <property type="term" value="P:negative regulation of CD4-positive, alpha-beta T cell differentiation"/>
    <property type="evidence" value="ECO:0000314"/>
    <property type="project" value="UniProtKB"/>
</dbReference>
<dbReference type="GO" id="GO:0017055">
    <property type="term" value="P:negative regulation of RNA polymerase II transcription preinitiation complex assembly"/>
    <property type="evidence" value="ECO:0000314"/>
    <property type="project" value="UniProtKB"/>
</dbReference>
<dbReference type="GO" id="GO:0000122">
    <property type="term" value="P:negative regulation of transcription by RNA polymerase II"/>
    <property type="evidence" value="ECO:0000314"/>
    <property type="project" value="UniProtKB"/>
</dbReference>
<dbReference type="GO" id="GO:0032689">
    <property type="term" value="P:negative regulation of type II interferon production"/>
    <property type="evidence" value="ECO:0000314"/>
    <property type="project" value="UniProtKB"/>
</dbReference>
<dbReference type="GO" id="GO:0031175">
    <property type="term" value="P:neuron projection development"/>
    <property type="evidence" value="ECO:0000250"/>
    <property type="project" value="UniProtKB"/>
</dbReference>
<dbReference type="GO" id="GO:0097350">
    <property type="term" value="P:neutrophil clearance"/>
    <property type="evidence" value="ECO:0000314"/>
    <property type="project" value="UniProtKB"/>
</dbReference>
<dbReference type="GO" id="GO:0002270">
    <property type="term" value="P:plasmacytoid dendritic cell activation"/>
    <property type="evidence" value="ECO:0007669"/>
    <property type="project" value="Ensembl"/>
</dbReference>
<dbReference type="GO" id="GO:0042104">
    <property type="term" value="P:positive regulation of activated T cell proliferation"/>
    <property type="evidence" value="ECO:0000315"/>
    <property type="project" value="UniProtKB"/>
</dbReference>
<dbReference type="GO" id="GO:0043065">
    <property type="term" value="P:positive regulation of apoptotic process"/>
    <property type="evidence" value="ECO:0000314"/>
    <property type="project" value="UniProtKB"/>
</dbReference>
<dbReference type="GO" id="GO:0010508">
    <property type="term" value="P:positive regulation of autophagy"/>
    <property type="evidence" value="ECO:0000315"/>
    <property type="project" value="UniProtKB"/>
</dbReference>
<dbReference type="GO" id="GO:0043536">
    <property type="term" value="P:positive regulation of blood vessel endothelial cell migration"/>
    <property type="evidence" value="ECO:0000315"/>
    <property type="project" value="BHF-UCL"/>
</dbReference>
<dbReference type="GO" id="GO:2000343">
    <property type="term" value="P:positive regulation of chemokine (C-X-C motif) ligand 2 production"/>
    <property type="evidence" value="ECO:0000314"/>
    <property type="project" value="CACAO"/>
</dbReference>
<dbReference type="GO" id="GO:0007204">
    <property type="term" value="P:positive regulation of cytosolic calcium ion concentration"/>
    <property type="evidence" value="ECO:0000314"/>
    <property type="project" value="UniProtKB"/>
</dbReference>
<dbReference type="GO" id="GO:2001200">
    <property type="term" value="P:positive regulation of dendritic cell differentiation"/>
    <property type="evidence" value="ECO:0000315"/>
    <property type="project" value="UniProtKB"/>
</dbReference>
<dbReference type="GO" id="GO:0043388">
    <property type="term" value="P:positive regulation of DNA binding"/>
    <property type="evidence" value="ECO:0000314"/>
    <property type="project" value="UniProtKB"/>
</dbReference>
<dbReference type="GO" id="GO:0070374">
    <property type="term" value="P:positive regulation of ERK1 and ERK2 cascade"/>
    <property type="evidence" value="ECO:0000314"/>
    <property type="project" value="UniProtKB"/>
</dbReference>
<dbReference type="GO" id="GO:0045819">
    <property type="term" value="P:positive regulation of glycogen catabolic process"/>
    <property type="evidence" value="ECO:0007669"/>
    <property type="project" value="Ensembl"/>
</dbReference>
<dbReference type="GO" id="GO:0032727">
    <property type="term" value="P:positive regulation of interferon-alpha production"/>
    <property type="evidence" value="ECO:0007669"/>
    <property type="project" value="Ensembl"/>
</dbReference>
<dbReference type="GO" id="GO:0032728">
    <property type="term" value="P:positive regulation of interferon-beta production"/>
    <property type="evidence" value="ECO:0007669"/>
    <property type="project" value="Ensembl"/>
</dbReference>
<dbReference type="GO" id="GO:0032731">
    <property type="term" value="P:positive regulation of interleukin-1 beta production"/>
    <property type="evidence" value="ECO:0007669"/>
    <property type="project" value="Ensembl"/>
</dbReference>
<dbReference type="GO" id="GO:0032732">
    <property type="term" value="P:positive regulation of interleukin-1 production"/>
    <property type="evidence" value="ECO:0000314"/>
    <property type="project" value="UniProtKB"/>
</dbReference>
<dbReference type="GO" id="GO:0032733">
    <property type="term" value="P:positive regulation of interleukin-10 production"/>
    <property type="evidence" value="ECO:0000314"/>
    <property type="project" value="UniProtKB"/>
</dbReference>
<dbReference type="GO" id="GO:0032735">
    <property type="term" value="P:positive regulation of interleukin-12 production"/>
    <property type="evidence" value="ECO:0000315"/>
    <property type="project" value="UniProtKB"/>
</dbReference>
<dbReference type="GO" id="GO:0032755">
    <property type="term" value="P:positive regulation of interleukin-6 production"/>
    <property type="evidence" value="ECO:0000314"/>
    <property type="project" value="UniProtKB"/>
</dbReference>
<dbReference type="GO" id="GO:0032757">
    <property type="term" value="P:positive regulation of interleukin-8 production"/>
    <property type="evidence" value="ECO:0000314"/>
    <property type="project" value="CACAO"/>
</dbReference>
<dbReference type="GO" id="GO:0046330">
    <property type="term" value="P:positive regulation of JNK cascade"/>
    <property type="evidence" value="ECO:0000314"/>
    <property type="project" value="UniProtKB"/>
</dbReference>
<dbReference type="GO" id="GO:0043410">
    <property type="term" value="P:positive regulation of MAPK cascade"/>
    <property type="evidence" value="ECO:0000314"/>
    <property type="project" value="UniProtKB"/>
</dbReference>
<dbReference type="GO" id="GO:0032425">
    <property type="term" value="P:positive regulation of mismatch repair"/>
    <property type="evidence" value="ECO:0000314"/>
    <property type="project" value="UniProtKB"/>
</dbReference>
<dbReference type="GO" id="GO:0071639">
    <property type="term" value="P:positive regulation of monocyte chemotactic protein-1 production"/>
    <property type="evidence" value="ECO:0007669"/>
    <property type="project" value="Ensembl"/>
</dbReference>
<dbReference type="GO" id="GO:0090026">
    <property type="term" value="P:positive regulation of monocyte chemotaxis"/>
    <property type="evidence" value="ECO:0000314"/>
    <property type="project" value="UniProtKB"/>
</dbReference>
<dbReference type="GO" id="GO:0045639">
    <property type="term" value="P:positive regulation of myeloid cell differentiation"/>
    <property type="evidence" value="ECO:0007669"/>
    <property type="project" value="Ensembl"/>
</dbReference>
<dbReference type="GO" id="GO:1905455">
    <property type="term" value="P:positive regulation of myeloid progenitor cell differentiation"/>
    <property type="evidence" value="ECO:0007669"/>
    <property type="project" value="Ensembl"/>
</dbReference>
<dbReference type="GO" id="GO:1901224">
    <property type="term" value="P:positive regulation of non-canonical NF-kappaB signal transduction"/>
    <property type="evidence" value="ECO:0007669"/>
    <property type="project" value="Ensembl"/>
</dbReference>
<dbReference type="GO" id="GO:1903672">
    <property type="term" value="P:positive regulation of sprouting angiogenesis"/>
    <property type="evidence" value="ECO:0007669"/>
    <property type="project" value="Ensembl"/>
</dbReference>
<dbReference type="GO" id="GO:0034137">
    <property type="term" value="P:positive regulation of toll-like receptor 2 signaling pathway"/>
    <property type="evidence" value="ECO:0007669"/>
    <property type="project" value="Ensembl"/>
</dbReference>
<dbReference type="GO" id="GO:0034145">
    <property type="term" value="P:positive regulation of toll-like receptor 4 signaling pathway"/>
    <property type="evidence" value="ECO:0007669"/>
    <property type="project" value="Ensembl"/>
</dbReference>
<dbReference type="GO" id="GO:0034165">
    <property type="term" value="P:positive regulation of toll-like receptor 9 signaling pathway"/>
    <property type="evidence" value="ECO:0000250"/>
    <property type="project" value="UniProtKB"/>
</dbReference>
<dbReference type="GO" id="GO:0045944">
    <property type="term" value="P:positive regulation of transcription by RNA polymerase II"/>
    <property type="evidence" value="ECO:0000314"/>
    <property type="project" value="UniProtKB"/>
</dbReference>
<dbReference type="GO" id="GO:0032760">
    <property type="term" value="P:positive regulation of tumor necrosis factor production"/>
    <property type="evidence" value="ECO:0000314"/>
    <property type="project" value="UniProtKB"/>
</dbReference>
<dbReference type="GO" id="GO:1905564">
    <property type="term" value="P:positive regulation of vascular endothelial cell proliferation"/>
    <property type="evidence" value="ECO:0000315"/>
    <property type="project" value="BHF-UCL"/>
</dbReference>
<dbReference type="GO" id="GO:0046598">
    <property type="term" value="P:positive regulation of viral entry into host cell"/>
    <property type="evidence" value="ECO:0000315"/>
    <property type="project" value="UniProtKB"/>
</dbReference>
<dbReference type="GO" id="GO:0090303">
    <property type="term" value="P:positive regulation of wound healing"/>
    <property type="evidence" value="ECO:0007669"/>
    <property type="project" value="Ensembl"/>
</dbReference>
<dbReference type="GO" id="GO:2000819">
    <property type="term" value="P:regulation of nucleotide-excision repair"/>
    <property type="evidence" value="ECO:0007669"/>
    <property type="project" value="Ensembl"/>
</dbReference>
<dbReference type="GO" id="GO:0032072">
    <property type="term" value="P:regulation of restriction endodeoxyribonuclease activity"/>
    <property type="evidence" value="ECO:0000314"/>
    <property type="project" value="UniProtKB"/>
</dbReference>
<dbReference type="GO" id="GO:0002840">
    <property type="term" value="P:regulation of T cell mediated immune response to tumor cell"/>
    <property type="evidence" value="ECO:0000250"/>
    <property type="project" value="UniProtKB"/>
</dbReference>
<dbReference type="GO" id="GO:0002643">
    <property type="term" value="P:regulation of tolerance induction"/>
    <property type="evidence" value="ECO:0000314"/>
    <property type="project" value="UniProtKB"/>
</dbReference>
<dbReference type="GO" id="GO:0006357">
    <property type="term" value="P:regulation of transcription by RNA polymerase II"/>
    <property type="evidence" value="ECO:0000318"/>
    <property type="project" value="GO_Central"/>
</dbReference>
<dbReference type="GO" id="GO:0051384">
    <property type="term" value="P:response to glucocorticoid"/>
    <property type="evidence" value="ECO:0007669"/>
    <property type="project" value="Ensembl"/>
</dbReference>
<dbReference type="GO" id="GO:0035711">
    <property type="term" value="P:T-helper 1 cell activation"/>
    <property type="evidence" value="ECO:0000314"/>
    <property type="project" value="UniProtKB"/>
</dbReference>
<dbReference type="GO" id="GO:0045063">
    <property type="term" value="P:T-helper 1 cell differentiation"/>
    <property type="evidence" value="ECO:0000315"/>
    <property type="project" value="UniProtKB"/>
</dbReference>
<dbReference type="GO" id="GO:0006366">
    <property type="term" value="P:transcription by RNA polymerase II"/>
    <property type="evidence" value="ECO:0007669"/>
    <property type="project" value="Ensembl"/>
</dbReference>
<dbReference type="GO" id="GO:0033151">
    <property type="term" value="P:V(D)J recombination"/>
    <property type="evidence" value="ECO:0000314"/>
    <property type="project" value="UniProtKB"/>
</dbReference>
<dbReference type="CDD" id="cd21978">
    <property type="entry name" value="HMG-box_HMGB_rpt1"/>
    <property type="match status" value="1"/>
</dbReference>
<dbReference type="CDD" id="cd21979">
    <property type="entry name" value="HMG-box_HMGB_rpt2"/>
    <property type="match status" value="1"/>
</dbReference>
<dbReference type="DisProt" id="DP01493"/>
<dbReference type="FunFam" id="1.10.30.10:FF:000006">
    <property type="entry name" value="High mobility group protein B1"/>
    <property type="match status" value="1"/>
</dbReference>
<dbReference type="FunFam" id="1.10.30.10:FF:000015">
    <property type="entry name" value="high mobility group protein B1"/>
    <property type="match status" value="1"/>
</dbReference>
<dbReference type="Gene3D" id="1.10.30.10">
    <property type="entry name" value="High mobility group box domain"/>
    <property type="match status" value="2"/>
</dbReference>
<dbReference type="IDEAL" id="IID00297"/>
<dbReference type="InterPro" id="IPR009071">
    <property type="entry name" value="HMG_box_dom"/>
</dbReference>
<dbReference type="InterPro" id="IPR036910">
    <property type="entry name" value="HMG_box_dom_sf"/>
</dbReference>
<dbReference type="InterPro" id="IPR017967">
    <property type="entry name" value="HMG_boxA_CS"/>
</dbReference>
<dbReference type="InterPro" id="IPR050342">
    <property type="entry name" value="HMGB"/>
</dbReference>
<dbReference type="PANTHER" id="PTHR48112:SF35">
    <property type="entry name" value="HIGH MOBILITY GROUP PROTEIN B1"/>
    <property type="match status" value="1"/>
</dbReference>
<dbReference type="PANTHER" id="PTHR48112">
    <property type="entry name" value="HIGH MOBILITY GROUP PROTEIN DSP1"/>
    <property type="match status" value="1"/>
</dbReference>
<dbReference type="Pfam" id="PF00505">
    <property type="entry name" value="HMG_box"/>
    <property type="match status" value="1"/>
</dbReference>
<dbReference type="Pfam" id="PF09011">
    <property type="entry name" value="HMG_box_2"/>
    <property type="match status" value="1"/>
</dbReference>
<dbReference type="PRINTS" id="PR00886">
    <property type="entry name" value="HIGHMOBLTY12"/>
</dbReference>
<dbReference type="SMART" id="SM00398">
    <property type="entry name" value="HMG"/>
    <property type="match status" value="2"/>
</dbReference>
<dbReference type="SUPFAM" id="SSF47095">
    <property type="entry name" value="HMG-box"/>
    <property type="match status" value="2"/>
</dbReference>
<dbReference type="PROSITE" id="PS00353">
    <property type="entry name" value="HMG_BOX_1"/>
    <property type="match status" value="1"/>
</dbReference>
<dbReference type="PROSITE" id="PS50118">
    <property type="entry name" value="HMG_BOX_2"/>
    <property type="match status" value="2"/>
</dbReference>
<evidence type="ECO:0000250" key="1">
    <source>
        <dbReference type="UniProtKB" id="P10103"/>
    </source>
</evidence>
<evidence type="ECO:0000250" key="2">
    <source>
        <dbReference type="UniProtKB" id="P12682"/>
    </source>
</evidence>
<evidence type="ECO:0000250" key="3">
    <source>
        <dbReference type="UniProtKB" id="P63158"/>
    </source>
</evidence>
<evidence type="ECO:0000250" key="4">
    <source>
        <dbReference type="UniProtKB" id="P63159"/>
    </source>
</evidence>
<evidence type="ECO:0000255" key="5">
    <source>
        <dbReference type="PROSITE-ProRule" id="PRU00267"/>
    </source>
</evidence>
<evidence type="ECO:0000256" key="6">
    <source>
        <dbReference type="SAM" id="MobiDB-lite"/>
    </source>
</evidence>
<evidence type="ECO:0000269" key="7">
    <source>
    </source>
</evidence>
<evidence type="ECO:0000269" key="8">
    <source>
    </source>
</evidence>
<evidence type="ECO:0000269" key="9">
    <source>
    </source>
</evidence>
<evidence type="ECO:0000269" key="10">
    <source>
    </source>
</evidence>
<evidence type="ECO:0000269" key="11">
    <source>
    </source>
</evidence>
<evidence type="ECO:0000269" key="12">
    <source>
    </source>
</evidence>
<evidence type="ECO:0000269" key="13">
    <source>
    </source>
</evidence>
<evidence type="ECO:0000269" key="14">
    <source>
    </source>
</evidence>
<evidence type="ECO:0000269" key="15">
    <source>
    </source>
</evidence>
<evidence type="ECO:0000269" key="16">
    <source>
    </source>
</evidence>
<evidence type="ECO:0000269" key="17">
    <source>
    </source>
</evidence>
<evidence type="ECO:0000269" key="18">
    <source>
    </source>
</evidence>
<evidence type="ECO:0000269" key="19">
    <source>
    </source>
</evidence>
<evidence type="ECO:0000269" key="20">
    <source>
    </source>
</evidence>
<evidence type="ECO:0000269" key="21">
    <source>
    </source>
</evidence>
<evidence type="ECO:0000269" key="22">
    <source>
    </source>
</evidence>
<evidence type="ECO:0000269" key="23">
    <source>
    </source>
</evidence>
<evidence type="ECO:0000269" key="24">
    <source>
    </source>
</evidence>
<evidence type="ECO:0000269" key="25">
    <source>
    </source>
</evidence>
<evidence type="ECO:0000269" key="26">
    <source>
    </source>
</evidence>
<evidence type="ECO:0000269" key="27">
    <source>
    </source>
</evidence>
<evidence type="ECO:0000269" key="28">
    <source>
    </source>
</evidence>
<evidence type="ECO:0000269" key="29">
    <source>
    </source>
</evidence>
<evidence type="ECO:0000269" key="30">
    <source>
    </source>
</evidence>
<evidence type="ECO:0000269" key="31">
    <source>
    </source>
</evidence>
<evidence type="ECO:0000269" key="32">
    <source>
    </source>
</evidence>
<evidence type="ECO:0000269" key="33">
    <source>
    </source>
</evidence>
<evidence type="ECO:0000269" key="34">
    <source>
    </source>
</evidence>
<evidence type="ECO:0000269" key="35">
    <source>
    </source>
</evidence>
<evidence type="ECO:0000269" key="36">
    <source>
    </source>
</evidence>
<evidence type="ECO:0000269" key="37">
    <source>
    </source>
</evidence>
<evidence type="ECO:0000269" key="38">
    <source>
    </source>
</evidence>
<evidence type="ECO:0000269" key="39">
    <source>
    </source>
</evidence>
<evidence type="ECO:0000269" key="40">
    <source>
    </source>
</evidence>
<evidence type="ECO:0000269" key="41">
    <source>
    </source>
</evidence>
<evidence type="ECO:0000269" key="42">
    <source>
    </source>
</evidence>
<evidence type="ECO:0000269" key="43">
    <source>
    </source>
</evidence>
<evidence type="ECO:0000269" key="44">
    <source>
    </source>
</evidence>
<evidence type="ECO:0000269" key="45">
    <source>
    </source>
</evidence>
<evidence type="ECO:0000269" key="46">
    <source>
    </source>
</evidence>
<evidence type="ECO:0000269" key="47">
    <source>
    </source>
</evidence>
<evidence type="ECO:0000269" key="48">
    <source>
    </source>
</evidence>
<evidence type="ECO:0000269" key="49">
    <source>
    </source>
</evidence>
<evidence type="ECO:0000269" key="50">
    <source>
    </source>
</evidence>
<evidence type="ECO:0000269" key="51">
    <source>
    </source>
</evidence>
<evidence type="ECO:0000269" key="52">
    <source>
    </source>
</evidence>
<evidence type="ECO:0000269" key="53">
    <source>
    </source>
</evidence>
<evidence type="ECO:0000269" key="54">
    <source ref="10"/>
</evidence>
<evidence type="ECO:0000269" key="55">
    <source ref="8"/>
</evidence>
<evidence type="ECO:0000305" key="56"/>
<evidence type="ECO:0000305" key="57">
    <source>
    </source>
</evidence>
<evidence type="ECO:0000305" key="58">
    <source>
    </source>
</evidence>
<evidence type="ECO:0000305" key="59">
    <source>
    </source>
</evidence>
<evidence type="ECO:0000305" key="60">
    <source>
    </source>
</evidence>
<evidence type="ECO:0000305" key="61">
    <source>
    </source>
</evidence>
<evidence type="ECO:0000305" key="62">
    <source>
    </source>
</evidence>
<evidence type="ECO:0000305" key="63">
    <source>
    </source>
</evidence>
<evidence type="ECO:0000305" key="64">
    <source>
    </source>
</evidence>
<evidence type="ECO:0000305" key="65">
    <source>
    </source>
</evidence>
<evidence type="ECO:0000305" key="66">
    <source>
    </source>
</evidence>
<evidence type="ECO:0000305" key="67">
    <source>
    </source>
</evidence>
<evidence type="ECO:0000312" key="68">
    <source>
        <dbReference type="HGNC" id="HGNC:4983"/>
    </source>
</evidence>
<evidence type="ECO:0007744" key="69">
    <source>
    </source>
</evidence>
<evidence type="ECO:0007744" key="70">
    <source>
    </source>
</evidence>
<evidence type="ECO:0007744" key="71">
    <source>
    </source>
</evidence>
<evidence type="ECO:0007744" key="72">
    <source>
    </source>
</evidence>
<evidence type="ECO:0007744" key="73">
    <source>
    </source>
</evidence>
<evidence type="ECO:0007829" key="74">
    <source>
        <dbReference type="PDB" id="2LY4"/>
    </source>
</evidence>
<evidence type="ECO:0007829" key="75">
    <source>
        <dbReference type="PDB" id="2YRQ"/>
    </source>
</evidence>
<evidence type="ECO:0007829" key="76">
    <source>
        <dbReference type="PDB" id="6CIK"/>
    </source>
</evidence>
<sequence>MGKGDPKKPRGKMSSYAFFVQTCREEHKKKHPDASVNFSEFSKKCSERWKTMSAKEKGKFEDMAKADKARYEREMKTYIPPKGETKKKFKDPNAPKRPPSAFFLFCSEYRPKIKGEHPGLSIGDVAKKLGEMWNNTAADDKQPYEKKAAKLKEKYEKDIAAYRAKGKPDAAKKGVVKAEKSKKKKEEEEDEEDEEDEEEEEDEEDEDEEEDDDDE</sequence>
<protein>
    <recommendedName>
        <fullName>High mobility group protein B1</fullName>
    </recommendedName>
    <alternativeName>
        <fullName>High mobility group protein 1</fullName>
        <shortName>HMG-1</shortName>
    </alternativeName>
</protein>
<reference key="1">
    <citation type="journal article" date="1989" name="Nucleic Acids Res.">
        <title>A human placental cDNA clone that encodes nonhistone chromosomal protein HMG-1.</title>
        <authorList>
            <person name="Wen L."/>
            <person name="Huang J.K."/>
            <person name="Johnson B.H."/>
            <person name="Reeck G.R."/>
        </authorList>
    </citation>
    <scope>NUCLEOTIDE SEQUENCE [MRNA]</scope>
</reference>
<reference key="2">
    <citation type="journal article" date="1996" name="Genomics">
        <title>The active gene that encodes human high mobility group 1 protein (HMG1) contains introns and maps to chromosome 13.</title>
        <authorList>
            <person name="Ferrari S."/>
            <person name="Finelli P."/>
            <person name="Rocchi M."/>
            <person name="Bianchi M.E."/>
        </authorList>
    </citation>
    <scope>NUCLEOTIDE SEQUENCE [GENOMIC DNA]</scope>
</reference>
<reference key="3">
    <citation type="journal article" date="1997" name="Int. J. Cancer">
        <title>Expression of high-mobility group-1 mRNA in human gastrointestinal adenocarcinoma and corresponding non-cancerous mucosa.</title>
        <authorList>
            <person name="Xiang Y.-Y."/>
            <person name="Wang D.-Y."/>
            <person name="Tanaka M."/>
            <person name="Suzuki M."/>
            <person name="Kiyokawa E."/>
            <person name="Igarashi H."/>
            <person name="Niato Y."/>
            <person name="Shen Q."/>
            <person name="Sugimura H."/>
        </authorList>
    </citation>
    <scope>NUCLEOTIDE SEQUENCE [MRNA]</scope>
    <scope>VARIANTS ARG-11; GLU-149 AND GLY-190</scope>
</reference>
<reference key="4">
    <citation type="journal article" date="2007" name="Tissue Antigens">
        <title>The genetic variation of the human HMGB1 gene.</title>
        <authorList>
            <person name="Kornblit B."/>
            <person name="Munthe-Fog L."/>
            <person name="Petersen S."/>
            <person name="Madsen H."/>
            <person name="Vindeloev L."/>
            <person name="Garred P."/>
        </authorList>
    </citation>
    <scope>NUCLEOTIDE SEQUENCE [GENOMIC DNA]</scope>
</reference>
<reference key="5">
    <citation type="submission" date="2003-09" db="EMBL/GenBank/DDBJ databases">
        <authorList>
            <person name="He F.T."/>
            <person name="Yang Z.H."/>
            <person name="Ji Q."/>
            <person name="Li R."/>
            <person name="Peng J."/>
            <person name="Jiang Y."/>
            <person name="Zhong X."/>
        </authorList>
    </citation>
    <scope>NUCLEOTIDE SEQUENCE [MRNA]</scope>
</reference>
<reference key="6">
    <citation type="journal article" date="2004" name="Nat. Genet.">
        <title>Complete sequencing and characterization of 21,243 full-length human cDNAs.</title>
        <authorList>
            <person name="Ota T."/>
            <person name="Suzuki Y."/>
            <person name="Nishikawa T."/>
            <person name="Otsuki T."/>
            <person name="Sugiyama T."/>
            <person name="Irie R."/>
            <person name="Wakamatsu A."/>
            <person name="Hayashi K."/>
            <person name="Sato H."/>
            <person name="Nagai K."/>
            <person name="Kimura K."/>
            <person name="Makita H."/>
            <person name="Sekine M."/>
            <person name="Obayashi M."/>
            <person name="Nishi T."/>
            <person name="Shibahara T."/>
            <person name="Tanaka T."/>
            <person name="Ishii S."/>
            <person name="Yamamoto J."/>
            <person name="Saito K."/>
            <person name="Kawai Y."/>
            <person name="Isono Y."/>
            <person name="Nakamura Y."/>
            <person name="Nagahari K."/>
            <person name="Murakami K."/>
            <person name="Yasuda T."/>
            <person name="Iwayanagi T."/>
            <person name="Wagatsuma M."/>
            <person name="Shiratori A."/>
            <person name="Sudo H."/>
            <person name="Hosoiri T."/>
            <person name="Kaku Y."/>
            <person name="Kodaira H."/>
            <person name="Kondo H."/>
            <person name="Sugawara M."/>
            <person name="Takahashi M."/>
            <person name="Kanda K."/>
            <person name="Yokoi T."/>
            <person name="Furuya T."/>
            <person name="Kikkawa E."/>
            <person name="Omura Y."/>
            <person name="Abe K."/>
            <person name="Kamihara K."/>
            <person name="Katsuta N."/>
            <person name="Sato K."/>
            <person name="Tanikawa M."/>
            <person name="Yamazaki M."/>
            <person name="Ninomiya K."/>
            <person name="Ishibashi T."/>
            <person name="Yamashita H."/>
            <person name="Murakawa K."/>
            <person name="Fujimori K."/>
            <person name="Tanai H."/>
            <person name="Kimata M."/>
            <person name="Watanabe M."/>
            <person name="Hiraoka S."/>
            <person name="Chiba Y."/>
            <person name="Ishida S."/>
            <person name="Ono Y."/>
            <person name="Takiguchi S."/>
            <person name="Watanabe S."/>
            <person name="Yosida M."/>
            <person name="Hotuta T."/>
            <person name="Kusano J."/>
            <person name="Kanehori K."/>
            <person name="Takahashi-Fujii A."/>
            <person name="Hara H."/>
            <person name="Tanase T.-O."/>
            <person name="Nomura Y."/>
            <person name="Togiya S."/>
            <person name="Komai F."/>
            <person name="Hara R."/>
            <person name="Takeuchi K."/>
            <person name="Arita M."/>
            <person name="Imose N."/>
            <person name="Musashino K."/>
            <person name="Yuuki H."/>
            <person name="Oshima A."/>
            <person name="Sasaki N."/>
            <person name="Aotsuka S."/>
            <person name="Yoshikawa Y."/>
            <person name="Matsunawa H."/>
            <person name="Ichihara T."/>
            <person name="Shiohata N."/>
            <person name="Sano S."/>
            <person name="Moriya S."/>
            <person name="Momiyama H."/>
            <person name="Satoh N."/>
            <person name="Takami S."/>
            <person name="Terashima Y."/>
            <person name="Suzuki O."/>
            <person name="Nakagawa S."/>
            <person name="Senoh A."/>
            <person name="Mizoguchi H."/>
            <person name="Goto Y."/>
            <person name="Shimizu F."/>
            <person name="Wakebe H."/>
            <person name="Hishigaki H."/>
            <person name="Watanabe T."/>
            <person name="Sugiyama A."/>
            <person name="Takemoto M."/>
            <person name="Kawakami B."/>
            <person name="Yamazaki M."/>
            <person name="Watanabe K."/>
            <person name="Kumagai A."/>
            <person name="Itakura S."/>
            <person name="Fukuzumi Y."/>
            <person name="Fujimori Y."/>
            <person name="Komiyama M."/>
            <person name="Tashiro H."/>
            <person name="Tanigami A."/>
            <person name="Fujiwara T."/>
            <person name="Ono T."/>
            <person name="Yamada K."/>
            <person name="Fujii Y."/>
            <person name="Ozaki K."/>
            <person name="Hirao M."/>
            <person name="Ohmori Y."/>
            <person name="Kawabata A."/>
            <person name="Hikiji T."/>
            <person name="Kobatake N."/>
            <person name="Inagaki H."/>
            <person name="Ikema Y."/>
            <person name="Okamoto S."/>
            <person name="Okitani R."/>
            <person name="Kawakami T."/>
            <person name="Noguchi S."/>
            <person name="Itoh T."/>
            <person name="Shigeta K."/>
            <person name="Senba T."/>
            <person name="Matsumura K."/>
            <person name="Nakajima Y."/>
            <person name="Mizuno T."/>
            <person name="Morinaga M."/>
            <person name="Sasaki M."/>
            <person name="Togashi T."/>
            <person name="Oyama M."/>
            <person name="Hata H."/>
            <person name="Watanabe M."/>
            <person name="Komatsu T."/>
            <person name="Mizushima-Sugano J."/>
            <person name="Satoh T."/>
            <person name="Shirai Y."/>
            <person name="Takahashi Y."/>
            <person name="Nakagawa K."/>
            <person name="Okumura K."/>
            <person name="Nagase T."/>
            <person name="Nomura N."/>
            <person name="Kikuchi H."/>
            <person name="Masuho Y."/>
            <person name="Yamashita R."/>
            <person name="Nakai K."/>
            <person name="Yada T."/>
            <person name="Nakamura Y."/>
            <person name="Ohara O."/>
            <person name="Isogai T."/>
            <person name="Sugano S."/>
        </authorList>
    </citation>
    <scope>NUCLEOTIDE SEQUENCE [LARGE SCALE MRNA]</scope>
    <source>
        <tissue>Cerebellum</tissue>
    </source>
</reference>
<reference key="7">
    <citation type="journal article" date="2007" name="BMC Genomics">
        <title>The full-ORF clone resource of the German cDNA consortium.</title>
        <authorList>
            <person name="Bechtel S."/>
            <person name="Rosenfelder H."/>
            <person name="Duda A."/>
            <person name="Schmidt C.P."/>
            <person name="Ernst U."/>
            <person name="Wellenreuther R."/>
            <person name="Mehrle A."/>
            <person name="Schuster C."/>
            <person name="Bahr A."/>
            <person name="Bloecker H."/>
            <person name="Heubner D."/>
            <person name="Hoerlein A."/>
            <person name="Michel G."/>
            <person name="Wedler H."/>
            <person name="Koehrer K."/>
            <person name="Ottenwaelder B."/>
            <person name="Poustka A."/>
            <person name="Wiemann S."/>
            <person name="Schupp I."/>
        </authorList>
    </citation>
    <scope>NUCLEOTIDE SEQUENCE [LARGE SCALE MRNA]</scope>
    <source>
        <tissue>Small intestine</tissue>
    </source>
</reference>
<reference key="8">
    <citation type="submission" date="2004-06" db="EMBL/GenBank/DDBJ databases">
        <title>Cloning of human full open reading frames in Gateway(TM) system entry vector (pDONR201).</title>
        <authorList>
            <person name="Ebert L."/>
            <person name="Schick M."/>
            <person name="Neubert P."/>
            <person name="Schatten R."/>
            <person name="Henze S."/>
            <person name="Korn B."/>
        </authorList>
    </citation>
    <scope>NUCLEOTIDE SEQUENCE [LARGE SCALE MRNA]</scope>
</reference>
<reference key="9">
    <citation type="submission" date="2004-10" db="EMBL/GenBank/DDBJ databases">
        <title>Cloning of human full-length CDSs in BD Creator(TM) system donor vector.</title>
        <authorList>
            <person name="Kalnine N."/>
            <person name="Chen X."/>
            <person name="Rolfs A."/>
            <person name="Halleck A."/>
            <person name="Hines L."/>
            <person name="Eisenstein S."/>
            <person name="Koundinya M."/>
            <person name="Raphael J."/>
            <person name="Moreira D."/>
            <person name="Kelley T."/>
            <person name="LaBaer J."/>
            <person name="Lin Y."/>
            <person name="Phelan M."/>
            <person name="Farmer A."/>
        </authorList>
    </citation>
    <scope>NUCLEOTIDE SEQUENCE [LARGE SCALE MRNA]</scope>
</reference>
<reference key="10">
    <citation type="submission" date="2007-07" db="EMBL/GenBank/DDBJ databases">
        <authorList>
            <consortium name="SeattleSNPs variation discovery resource"/>
        </authorList>
    </citation>
    <scope>NUCLEOTIDE SEQUENCE [GENOMIC DNA]</scope>
    <scope>VARIANT GLN-156</scope>
</reference>
<reference key="11">
    <citation type="journal article" date="2004" name="Nature">
        <title>The DNA sequence and analysis of human chromosome 13.</title>
        <authorList>
            <person name="Dunham A."/>
            <person name="Matthews L.H."/>
            <person name="Burton J."/>
            <person name="Ashurst J.L."/>
            <person name="Howe K.L."/>
            <person name="Ashcroft K.J."/>
            <person name="Beare D.M."/>
            <person name="Burford D.C."/>
            <person name="Hunt S.E."/>
            <person name="Griffiths-Jones S."/>
            <person name="Jones M.C."/>
            <person name="Keenan S.J."/>
            <person name="Oliver K."/>
            <person name="Scott C.E."/>
            <person name="Ainscough R."/>
            <person name="Almeida J.P."/>
            <person name="Ambrose K.D."/>
            <person name="Andrews D.T."/>
            <person name="Ashwell R.I.S."/>
            <person name="Babbage A.K."/>
            <person name="Bagguley C.L."/>
            <person name="Bailey J."/>
            <person name="Bannerjee R."/>
            <person name="Barlow K.F."/>
            <person name="Bates K."/>
            <person name="Beasley H."/>
            <person name="Bird C.P."/>
            <person name="Bray-Allen S."/>
            <person name="Brown A.J."/>
            <person name="Brown J.Y."/>
            <person name="Burrill W."/>
            <person name="Carder C."/>
            <person name="Carter N.P."/>
            <person name="Chapman J.C."/>
            <person name="Clamp M.E."/>
            <person name="Clark S.Y."/>
            <person name="Clarke G."/>
            <person name="Clee C.M."/>
            <person name="Clegg S.C."/>
            <person name="Cobley V."/>
            <person name="Collins J.E."/>
            <person name="Corby N."/>
            <person name="Coville G.J."/>
            <person name="Deloukas P."/>
            <person name="Dhami P."/>
            <person name="Dunham I."/>
            <person name="Dunn M."/>
            <person name="Earthrowl M.E."/>
            <person name="Ellington A.G."/>
            <person name="Faulkner L."/>
            <person name="Frankish A.G."/>
            <person name="Frankland J."/>
            <person name="French L."/>
            <person name="Garner P."/>
            <person name="Garnett J."/>
            <person name="Gilbert J.G.R."/>
            <person name="Gilson C.J."/>
            <person name="Ghori J."/>
            <person name="Grafham D.V."/>
            <person name="Gribble S.M."/>
            <person name="Griffiths C."/>
            <person name="Hall R.E."/>
            <person name="Hammond S."/>
            <person name="Harley J.L."/>
            <person name="Hart E.A."/>
            <person name="Heath P.D."/>
            <person name="Howden P.J."/>
            <person name="Huckle E.J."/>
            <person name="Hunt P.J."/>
            <person name="Hunt A.R."/>
            <person name="Johnson C."/>
            <person name="Johnson D."/>
            <person name="Kay M."/>
            <person name="Kimberley A.M."/>
            <person name="King A."/>
            <person name="Laird G.K."/>
            <person name="Langford C.J."/>
            <person name="Lawlor S."/>
            <person name="Leongamornlert D.A."/>
            <person name="Lloyd D.M."/>
            <person name="Lloyd C."/>
            <person name="Loveland J.E."/>
            <person name="Lovell J."/>
            <person name="Martin S."/>
            <person name="Mashreghi-Mohammadi M."/>
            <person name="McLaren S.J."/>
            <person name="McMurray A."/>
            <person name="Milne S."/>
            <person name="Moore M.J.F."/>
            <person name="Nickerson T."/>
            <person name="Palmer S.A."/>
            <person name="Pearce A.V."/>
            <person name="Peck A.I."/>
            <person name="Pelan S."/>
            <person name="Phillimore B."/>
            <person name="Porter K.M."/>
            <person name="Rice C.M."/>
            <person name="Searle S."/>
            <person name="Sehra H.K."/>
            <person name="Shownkeen R."/>
            <person name="Skuce C.D."/>
            <person name="Smith M."/>
            <person name="Steward C.A."/>
            <person name="Sycamore N."/>
            <person name="Tester J."/>
            <person name="Thomas D.W."/>
            <person name="Tracey A."/>
            <person name="Tromans A."/>
            <person name="Tubby B."/>
            <person name="Wall M."/>
            <person name="Wallis J.M."/>
            <person name="West A.P."/>
            <person name="Whitehead S.L."/>
            <person name="Willey D.L."/>
            <person name="Wilming L."/>
            <person name="Wray P.W."/>
            <person name="Wright M.W."/>
            <person name="Young L."/>
            <person name="Coulson A."/>
            <person name="Durbin R.M."/>
            <person name="Hubbard T."/>
            <person name="Sulston J.E."/>
            <person name="Beck S."/>
            <person name="Bentley D.R."/>
            <person name="Rogers J."/>
            <person name="Ross M.T."/>
        </authorList>
    </citation>
    <scope>NUCLEOTIDE SEQUENCE [LARGE SCALE GENOMIC DNA]</scope>
</reference>
<reference key="12">
    <citation type="submission" date="2005-07" db="EMBL/GenBank/DDBJ databases">
        <authorList>
            <person name="Mural R.J."/>
            <person name="Istrail S."/>
            <person name="Sutton G.G."/>
            <person name="Florea L."/>
            <person name="Halpern A.L."/>
            <person name="Mobarry C.M."/>
            <person name="Lippert R."/>
            <person name="Walenz B."/>
            <person name="Shatkay H."/>
            <person name="Dew I."/>
            <person name="Miller J.R."/>
            <person name="Flanigan M.J."/>
            <person name="Edwards N.J."/>
            <person name="Bolanos R."/>
            <person name="Fasulo D."/>
            <person name="Halldorsson B.V."/>
            <person name="Hannenhalli S."/>
            <person name="Turner R."/>
            <person name="Yooseph S."/>
            <person name="Lu F."/>
            <person name="Nusskern D.R."/>
            <person name="Shue B.C."/>
            <person name="Zheng X.H."/>
            <person name="Zhong F."/>
            <person name="Delcher A.L."/>
            <person name="Huson D.H."/>
            <person name="Kravitz S.A."/>
            <person name="Mouchard L."/>
            <person name="Reinert K."/>
            <person name="Remington K.A."/>
            <person name="Clark A.G."/>
            <person name="Waterman M.S."/>
            <person name="Eichler E.E."/>
            <person name="Adams M.D."/>
            <person name="Hunkapiller M.W."/>
            <person name="Myers E.W."/>
            <person name="Venter J.C."/>
        </authorList>
    </citation>
    <scope>NUCLEOTIDE SEQUENCE [LARGE SCALE GENOMIC DNA]</scope>
</reference>
<reference key="13">
    <citation type="journal article" date="2004" name="Genome Res.">
        <title>The status, quality, and expansion of the NIH full-length cDNA project: the Mammalian Gene Collection (MGC).</title>
        <authorList>
            <consortium name="The MGC Project Team"/>
        </authorList>
    </citation>
    <scope>NUCLEOTIDE SEQUENCE [LARGE SCALE MRNA]</scope>
    <source>
        <tissue>Brain</tissue>
        <tissue>Cervix</tissue>
        <tissue>Testis</tissue>
    </source>
</reference>
<reference key="14">
    <citation type="journal article" date="1997" name="Electrophoresis">
        <title>Two-dimensional electrophoretic analysis of human breast carcinoma proteins: mapping of proteins that bind to the SH3 domain of mixed lineage kinase MLK2.</title>
        <authorList>
            <person name="Rasmussen R.K."/>
            <person name="Ji H."/>
            <person name="Eddes J.S."/>
            <person name="Moritz R.L."/>
            <person name="Reid G.E."/>
            <person name="Simpson R.J."/>
            <person name="Dorow D.S."/>
        </authorList>
    </citation>
    <scope>PROTEIN SEQUENCE OF 58-65 AND 113-127</scope>
    <source>
        <tissue>Mammary carcinoma</tissue>
    </source>
</reference>
<reference key="15">
    <citation type="journal article" date="2000" name="Thromb. Haemost.">
        <title>Occurrence of amphoterin (HMG1) as an endogenous protein of human platelets that is exported to the cell surface upon platelet activation.</title>
        <authorList>
            <person name="Rouhiainen A."/>
            <person name="Imai S."/>
            <person name="Rauvala H."/>
            <person name="Parkkinen J."/>
        </authorList>
    </citation>
    <scope>SUBCELLULAR LOCATION</scope>
    <scope>TISSUE SPECIFICITY</scope>
</reference>
<reference key="16">
    <citation type="journal article" date="2002" name="EMBO Rep.">
        <title>The nuclear protein HMGB1 is secreted by monocytes via a non-classical, vesicle-mediated secretory pathway.</title>
        <authorList>
            <person name="Gardella S."/>
            <person name="Andrei C."/>
            <person name="Ferrera D."/>
            <person name="Lotti L.V."/>
            <person name="Torrisi M.R."/>
            <person name="Bianchi M.E."/>
            <person name="Rubartelli A."/>
        </authorList>
    </citation>
    <scope>SUBCELLULAR LOCATION</scope>
</reference>
<reference key="17">
    <citation type="journal article" date="2003" name="EMBO J.">
        <title>Monocytic cells hyperacetylate chromatin protein HMGB1 to redirect it towards secretion.</title>
        <authorList>
            <person name="Bonaldi T."/>
            <person name="Talamo F."/>
            <person name="Scaffidi P."/>
            <person name="Ferrera D."/>
            <person name="Porto A."/>
            <person name="Bachi A."/>
            <person name="Rubartelli A."/>
            <person name="Agresti A."/>
            <person name="Bianchi M.E."/>
        </authorList>
    </citation>
    <scope>SUBCELLULAR LOCATION</scope>
</reference>
<reference key="18">
    <citation type="journal article" date="2003" name="Mol. Med.">
        <title>Structural basis for the proinflammatory cytokine activity of high mobility group box 1.</title>
        <authorList>
            <person name="Li J."/>
            <person name="Kokkola R."/>
            <person name="Tabibzadeh S."/>
            <person name="Yang R."/>
            <person name="Ochani M."/>
            <person name="Qiang X."/>
            <person name="Harris H.E."/>
            <person name="Czura C.J."/>
            <person name="Wang H."/>
            <person name="Ulloa L."/>
            <person name="Wang H."/>
            <person name="Warren H.S."/>
            <person name="Moldawer L.L."/>
            <person name="Fink M.P."/>
            <person name="Andersson U."/>
            <person name="Tracey K.J."/>
            <person name="Yang H."/>
        </authorList>
    </citation>
    <scope>FUNCTION</scope>
    <scope>DOMAIN</scope>
</reference>
<reference key="19">
    <citation type="journal article" date="2004" name="J. Biol. Chem.">
        <title>Evidence for involvement of HMGB1 protein in human DNA mismatch repair.</title>
        <authorList>
            <person name="Yuan F."/>
            <person name="Gu L."/>
            <person name="Guo S."/>
            <person name="Wang C."/>
            <person name="Li G.M."/>
        </authorList>
    </citation>
    <scope>FUNCTION</scope>
    <scope>INTERACTION WITH MSH2</scope>
</reference>
<reference key="20">
    <citation type="journal article" date="2004" name="Proc. Natl. Acad. Sci. U.S.A.">
        <title>Reversing established sepsis with antagonists of endogenous high-mobility group box 1.</title>
        <authorList>
            <person name="Yang H."/>
            <person name="Ochani M."/>
            <person name="Li J."/>
            <person name="Qiang X."/>
            <person name="Tanovic M."/>
            <person name="Harris H.E."/>
            <person name="Susarla S.M."/>
            <person name="Ulloa L."/>
            <person name="Wang H."/>
            <person name="DiRaimo R."/>
            <person name="Czura C.J."/>
            <person name="Wang H."/>
            <person name="Roth J."/>
            <person name="Warren H.S."/>
            <person name="Fink M.P."/>
            <person name="Fenton M.J."/>
            <person name="Andersson U."/>
            <person name="Tracey K.J."/>
        </authorList>
    </citation>
    <scope>INVOLVEMENT IN INFLAMMATORY DISEASES</scope>
</reference>
<reference key="21">
    <citation type="journal article" date="2005" name="Cell">
        <title>Reconstitution of 5'-directed human mismatch repair in a purified system.</title>
        <authorList>
            <person name="Zhang Y."/>
            <person name="Yuan F."/>
            <person name="Presnell S.R."/>
            <person name="Tian K."/>
            <person name="Gao Y."/>
            <person name="Tomkinson A.E."/>
            <person name="Gu L."/>
            <person name="Li G.-M."/>
        </authorList>
    </citation>
    <scope>FUNCTION</scope>
</reference>
<reference key="22">
    <citation type="journal article" date="2005" name="J. Clin. Invest.">
        <title>The N-terminal domain of thrombomodulin sequesters high-mobility group-B1 protein, a novel antiinflammatory mechanism.</title>
        <authorList>
            <person name="Abeyama K."/>
            <person name="Stern D.M."/>
            <person name="Ito Y."/>
            <person name="Kawahara K."/>
            <person name="Yoshimoto Y."/>
            <person name="Tanaka M."/>
            <person name="Uchimura T."/>
            <person name="Ida N."/>
            <person name="Yamazaki Y."/>
            <person name="Yamada S."/>
            <person name="Yamamoto Y."/>
            <person name="Yamamoto H."/>
            <person name="Iino S."/>
            <person name="Taniguchi N."/>
            <person name="Maruyama I."/>
        </authorList>
    </citation>
    <scope>INTERACTION WITH THBD</scope>
</reference>
<reference key="23">
    <citation type="journal article" date="2005" name="J. Immunol.">
        <title>Release of high mobility group box 1 by dendritic cells controls T cell activation via the receptor for advanced glycation end products.</title>
        <authorList>
            <person name="Dumitriu I.E."/>
            <person name="Baruah P."/>
            <person name="Valentinis B."/>
            <person name="Voll R.E."/>
            <person name="Herrmann M."/>
            <person name="Nawroth P.P."/>
            <person name="Arnold B."/>
            <person name="Bianchi M.E."/>
            <person name="Manfredi A.A."/>
            <person name="Rovere-Querini P."/>
        </authorList>
    </citation>
    <scope>FUNCTION</scope>
    <scope>SUBCELLULAR LOCATION</scope>
</reference>
<reference key="24">
    <citation type="journal article" date="2005" name="Mol. Immunol.">
        <title>Monocytes promote natural killer cell interferon gamma production in response to the endogenous danger signal HMGB1.</title>
        <authorList>
            <person name="DeMarco R.A."/>
            <person name="Fink M.P."/>
            <person name="Lotze M.T."/>
        </authorList>
    </citation>
    <scope>FUNCTION</scope>
</reference>
<reference key="25">
    <citation type="journal article" date="2006" name="Am. J. Physiol.">
        <title>The extracellular release of HMGB1 during apoptotic cell death.</title>
        <authorList>
            <person name="Bell C.W."/>
            <person name="Jiang W."/>
            <person name="Reich C.F."/>
            <person name="Pisetsky D.S."/>
        </authorList>
    </citation>
    <scope>SUBCELLULAR LOCATION</scope>
</reference>
<reference key="26">
    <citation type="journal article" date="2006" name="Exp. Cell Res.">
        <title>Molecular basis for the redox control of nuclear transport of the structural chromatin protein Hmgb1.</title>
        <authorList>
            <person name="Hoppe G."/>
            <person name="Talcott K.E."/>
            <person name="Bhattacharya S.K."/>
            <person name="Crabb J.W."/>
            <person name="Sears J.E."/>
        </authorList>
    </citation>
    <scope>DISULFIDE BRIDGE</scope>
    <scope>REDOX FORMS</scope>
</reference>
<reference key="27">
    <citation type="journal article" date="2006" name="J. Immunol.">
        <title>Nucleocytoplasmic shuttling of HMGB1 is regulated by phosphorylation that redirects it toward secretion.</title>
        <authorList>
            <person name="Youn J.H."/>
            <person name="Shin J.S."/>
        </authorList>
    </citation>
    <scope>PHOSPHORYLATION</scope>
    <scope>MUTAGENESIS OF SER-35; SER-39; SER-42; SER-46; SER-53 AND SER-181</scope>
    <scope>SUBCELLULAR LOCATION</scope>
    <scope>INTERACTION WITH KPNA1</scope>
</reference>
<reference key="28">
    <citation type="journal article" date="2008" name="Immunity">
        <title>Induction of immunological tolerance by apoptotic cells requires caspase-dependent oxidation of high-mobility group box-1 protein.</title>
        <authorList>
            <person name="Kazama H."/>
            <person name="Ricci J.E."/>
            <person name="Herndon J.M."/>
            <person name="Hoppe G."/>
            <person name="Green D.R."/>
            <person name="Ferguson T.A."/>
        </authorList>
    </citation>
    <scope>FUNCTION</scope>
    <scope>SUBCELLULAR LOCATION</scope>
    <scope>MUTAGENESIS OF CYS-106</scope>
</reference>
<reference key="29">
    <citation type="journal article" date="2007" name="Mol. Cell">
        <title>HMGB1 is a cofactor in mammalian base excision repair.</title>
        <authorList>
            <person name="Prasad R."/>
            <person name="Liu Y."/>
            <person name="Deterding L.J."/>
            <person name="Poltoratsky V.P."/>
            <person name="Kedar P.S."/>
            <person name="Horton J.K."/>
            <person name="Kanno S."/>
            <person name="Asagoshi K."/>
            <person name="Hou E.W."/>
            <person name="Khodyreva S.N."/>
            <person name="Lavrik O.I."/>
            <person name="Tomer K.B."/>
            <person name="Yasui A."/>
            <person name="Wilson S.H."/>
        </authorList>
    </citation>
    <scope>FUNCTION</scope>
</reference>
<reference key="30">
    <citation type="journal article" date="2008" name="J. Exp. Med.">
        <title>Induction of inflammatory and immune responses by HMGB1-nucleosome complexes: implications for the pathogenesis of SLE.</title>
        <authorList>
            <person name="Urbonaviciute V."/>
            <person name="Furnrohr B.G."/>
            <person name="Meister S."/>
            <person name="Munoz L."/>
            <person name="Heyder P."/>
            <person name="De Marchis F."/>
            <person name="Bianchi M.E."/>
            <person name="Kirschning C."/>
            <person name="Wagner H."/>
            <person name="Manfredi A.A."/>
            <person name="Kalden J.R."/>
            <person name="Schett G."/>
            <person name="Rovere-Querini P."/>
            <person name="Herrmann M."/>
            <person name="Voll R.E."/>
        </authorList>
    </citation>
    <scope>FUNCTION</scope>
    <scope>TISSUE SPECIFICITY</scope>
    <scope>INVOLVEMENT IN AUTOIMMUNE DISEASES</scope>
</reference>
<reference key="31">
    <citation type="journal article" date="2008" name="J. Immunol.">
        <title>HMGB1 develops enhanced proinflammatory activity by binding to cytokines.</title>
        <authorList>
            <person name="Sha Y."/>
            <person name="Zmijewski J."/>
            <person name="Xu Z."/>
            <person name="Abraham E."/>
        </authorList>
    </citation>
    <scope>FUNCTION</scope>
    <scope>INTERACTION WITH IL1B</scope>
</reference>
<reference key="32">
    <citation type="journal article" date="2008" name="J. Immunol.">
        <title>High mobility group box 1 protein binding to lipopolysaccharide facilitates transfer of lipopolysaccharide to CD14 and enhances lipopolysaccharide-mediated TNF-alpha production in human monocytes.</title>
        <authorList>
            <person name="Youn J.H."/>
            <person name="Oh Y.J."/>
            <person name="Kim E.S."/>
            <person name="Choi J.E."/>
            <person name="Shin J.S."/>
        </authorList>
    </citation>
    <scope>FUNCTION</scope>
</reference>
<reference key="33">
    <citation type="journal article" date="2008" name="Nucleic Acids Res.">
        <title>Proteomic screen defines the hepatocyte nuclear factor 1alpha-binding partners and identifies HMGB1 as a new cofactor of HNF1alpha.</title>
        <authorList>
            <person name="Yu M."/>
            <person name="Wang J."/>
            <person name="Li W."/>
            <person name="Yuan Y.Z."/>
            <person name="Li C.Y."/>
            <person name="Qian X.H."/>
            <person name="Xu W.X."/>
            <person name="Zhan Y.Q."/>
            <person name="Yang X.M."/>
        </authorList>
    </citation>
    <scope>INTERACTION WITH HNF1A</scope>
</reference>
<reference key="34">
    <citation type="journal article" date="2008" name="Proc. Natl. Acad. Sci. U.S.A.">
        <title>A quantitative atlas of mitotic phosphorylation.</title>
        <authorList>
            <person name="Dephoure N."/>
            <person name="Zhou C."/>
            <person name="Villen J."/>
            <person name="Beausoleil S.A."/>
            <person name="Bakalarski C.E."/>
            <person name="Elledge S.J."/>
            <person name="Gygi S.P."/>
        </authorList>
    </citation>
    <scope>PHOSPHORYLATION [LARGE SCALE ANALYSIS] AT SER-35 AND SER-100</scope>
    <scope>IDENTIFICATION BY MASS SPECTROMETRY [LARGE SCALE ANALYSIS]</scope>
    <source>
        <tissue>Cervix carcinoma</tissue>
    </source>
</reference>
<reference key="35">
    <citation type="journal article" date="2009" name="Autoimmunity">
        <title>Oxidation of the alarmin high-mobility group box 1 protein (HMGB1) during apoptosis.</title>
        <authorList>
            <person name="Urbonaviciute V."/>
            <person name="Meister S."/>
            <person name="Furnrohr B.G."/>
            <person name="Frey B."/>
            <person name="Guckel E."/>
            <person name="Schett G."/>
            <person name="Herrmann M."/>
            <person name="Voll R.E."/>
        </authorList>
    </citation>
    <scope>REDOX FORMS</scope>
    <scope>SUBCELLULAR LOCATION</scope>
</reference>
<reference key="36">
    <citation type="journal article" date="2009" name="DNA Repair">
        <title>Human HMGB1 directly facilitates interactions between nucleotide excision repair proteins on triplex-directed psoralen interstrand crosslinks.</title>
        <authorList>
            <person name="Lange S.S."/>
            <person name="Reddy M.C."/>
            <person name="Vasquez K.M."/>
        </authorList>
    </citation>
    <scope>FUNCTION</scope>
    <scope>INTERACTION WITH XPA AND XPC</scope>
</reference>
<reference key="37">
    <citation type="journal article" date="2009" name="Mol. Carcinog.">
        <title>HMGB1: the jack-of-all-trades protein is a master DNA repair mechanic.</title>
        <authorList>
            <person name="Lange S.S."/>
            <person name="Vasquez K.M."/>
        </authorList>
    </citation>
    <scope>REVIEW ON FUNCTION RELATED TO DNA REPAIR</scope>
</reference>
<reference key="38">
    <citation type="journal article" date="2009" name="Science">
        <title>CD24 and Siglec-10 selectively repress tissue damage-induced immune responses.</title>
        <authorList>
            <person name="Chen G.Y."/>
            <person name="Tang J."/>
            <person name="Zheng P."/>
            <person name="Liu Y."/>
        </authorList>
    </citation>
    <scope>FUNCTION</scope>
    <scope>INTERACTION WITH CD24</scope>
    <scope>LIGAND FOR CD24:SIGLEC10 RECEPTOR COMPLEX</scope>
</reference>
<reference key="39">
    <citation type="journal article" date="2009" name="Science">
        <title>Lysine acetylation targets protein complexes and co-regulates major cellular functions.</title>
        <authorList>
            <person name="Choudhary C."/>
            <person name="Kumar C."/>
            <person name="Gnad F."/>
            <person name="Nielsen M.L."/>
            <person name="Rehman M."/>
            <person name="Walther T.C."/>
            <person name="Olsen J.V."/>
            <person name="Mann M."/>
        </authorList>
    </citation>
    <scope>ACETYLATION [LARGE SCALE ANALYSIS] AT LYS-30</scope>
    <scope>IDENTIFICATION BY MASS SPECTROMETRY [LARGE SCALE ANALYSIS]</scope>
</reference>
<reference key="40">
    <citation type="journal article" date="2010" name="Biochim. Biophys. Acta">
        <title>HMGB proteins: interactions with DNA and chromatin.</title>
        <authorList>
            <person name="Stros M."/>
        </authorList>
    </citation>
    <scope>REVIEW ON FUNCTION RELATED TO DNA-BINDING</scope>
</reference>
<reference key="41">
    <citation type="journal article" date="2010" name="J. Cell Biol.">
        <title>Endogenous HMGB1 regulates autophagy.</title>
        <authorList>
            <person name="Tang D."/>
            <person name="Kang R."/>
            <person name="Livesey K.M."/>
            <person name="Cheh C.W."/>
            <person name="Farkas A."/>
            <person name="Loughran P."/>
            <person name="Hoppe G."/>
            <person name="Bianchi M.E."/>
            <person name="Tracey K.J."/>
            <person name="Zeh H.J. III"/>
            <person name="Lotze M.T."/>
        </authorList>
    </citation>
    <scope>FUNCTION</scope>
    <scope>SUBCELLULAR LOCATION</scope>
    <scope>INTERACTION WITH BECN1</scope>
</reference>
<reference key="42">
    <citation type="journal article" date="2010" name="Proc. Natl. Acad. Sci. U.S.A.">
        <title>A critical cysteine is required for HMGB1 binding to Toll-like receptor 4 and activation of macrophage cytokine release.</title>
        <authorList>
            <person name="Yang H."/>
            <person name="Hreggvidsdottir H.S."/>
            <person name="Palmblad K."/>
            <person name="Wang H."/>
            <person name="Ochani M."/>
            <person name="Li J."/>
            <person name="Lu B."/>
            <person name="Chavan S."/>
            <person name="Rosas-Ballina M."/>
            <person name="Al-Abed Y."/>
            <person name="Akira S."/>
            <person name="Bierhaus A."/>
            <person name="Erlandsson-Harris H."/>
            <person name="Andersson U."/>
            <person name="Tracey K.J."/>
        </authorList>
    </citation>
    <scope>FUNCTION</scope>
    <scope>LIGAND FOR TLR4:LY96 RECEPTOR COMPLEX</scope>
    <scope>DOMAIN</scope>
</reference>
<reference key="43">
    <citation type="journal article" date="2010" name="Sci. Signal.">
        <title>Quantitative phosphoproteomics reveals widespread full phosphorylation site occupancy during mitosis.</title>
        <authorList>
            <person name="Olsen J.V."/>
            <person name="Vermeulen M."/>
            <person name="Santamaria A."/>
            <person name="Kumar C."/>
            <person name="Miller M.L."/>
            <person name="Jensen L.J."/>
            <person name="Gnad F."/>
            <person name="Cox J."/>
            <person name="Jensen T.S."/>
            <person name="Nigg E.A."/>
            <person name="Brunak S."/>
            <person name="Mann M."/>
        </authorList>
    </citation>
    <scope>PHOSPHORYLATION [LARGE SCALE ANALYSIS] AT SER-35</scope>
    <scope>IDENTIFICATION BY MASS SPECTROMETRY [LARGE SCALE ANALYSIS]</scope>
    <source>
        <tissue>Cervix carcinoma</tissue>
    </source>
</reference>
<reference key="44">
    <citation type="journal article" date="2011" name="Antioxid. Redox Signal.">
        <title>High mobility group box 1 (HMGB1) activates an autophagic response to oxidative stress.</title>
        <authorList>
            <person name="Tang D."/>
            <person name="Kang R."/>
            <person name="Livesey K.M."/>
            <person name="Zeh H.J."/>
            <person name="Lotze M.T."/>
        </authorList>
    </citation>
    <scope>FUNCTION</scope>
</reference>
<reference key="45">
    <citation type="journal article" date="2011" name="BMC Syst. Biol.">
        <title>Initial characterization of the human central proteome.</title>
        <authorList>
            <person name="Burkard T.R."/>
            <person name="Planyavsky M."/>
            <person name="Kaupe I."/>
            <person name="Breitwieser F.P."/>
            <person name="Buerckstuemmer T."/>
            <person name="Bennett K.L."/>
            <person name="Superti-Furga G."/>
            <person name="Colinge J."/>
        </authorList>
    </citation>
    <scope>IDENTIFICATION BY MASS SPECTROMETRY [LARGE SCALE ANALYSIS]</scope>
</reference>
<reference key="46">
    <citation type="journal article" date="2011" name="Eur. J. Immunol.">
        <title>Identification of lipopolysaccharide-binding peptide regions within HMGB1 and their effects on subclinical endotoxemia in a mouse model.</title>
        <authorList>
            <person name="Youn J.H."/>
            <person name="Kwak M.S."/>
            <person name="Wu J."/>
            <person name="Kim E.S."/>
            <person name="Ji Y."/>
            <person name="Min H.J."/>
            <person name="Yoo J.H."/>
            <person name="Choi J.E."/>
            <person name="Cho H.S."/>
            <person name="Shin J.S."/>
        </authorList>
    </citation>
    <scope>LPS-BINDING</scope>
</reference>
<reference key="47">
    <citation type="journal article" date="2011" name="Sci. Signal.">
        <title>System-wide temporal characterization of the proteome and phosphoproteome of human embryonic stem cell differentiation.</title>
        <authorList>
            <person name="Rigbolt K.T."/>
            <person name="Prokhorova T.A."/>
            <person name="Akimov V."/>
            <person name="Henningsen J."/>
            <person name="Johansen P.T."/>
            <person name="Kratchmarova I."/>
            <person name="Kassem M."/>
            <person name="Mann M."/>
            <person name="Olsen J.V."/>
            <person name="Blagoev B."/>
        </authorList>
    </citation>
    <scope>PHOSPHORYLATION [LARGE SCALE ANALYSIS] AT SER-35</scope>
    <scope>IDENTIFICATION BY MASS SPECTROMETRY [LARGE SCALE ANALYSIS]</scope>
</reference>
<reference key="48">
    <citation type="journal article" date="2012" name="J. Virol.">
        <title>HMGB1 protein binds to influenza virus nucleoprotein and promotes viral replication.</title>
        <authorList>
            <person name="Moisy D."/>
            <person name="Avilov S.V."/>
            <person name="Jacob Y."/>
            <person name="Laoide B.M."/>
            <person name="Ge X."/>
            <person name="Baudin F."/>
            <person name="Naffakh N."/>
            <person name="Jestin J.L."/>
        </authorList>
    </citation>
    <scope>FUNCTION (MICROBIAL INFECTION)</scope>
    <scope>INTERACTION WITH INFLUENZA A VIRUS PROTEIN NP (MICROBIAL INFECTION)</scope>
    <scope>SUBCELLULAR LOCATION</scope>
</reference>
<reference key="49">
    <citation type="journal article" date="2012" name="Int. Immunol.">
        <title>HMGB1 conveys immunosuppressive characteristics on regulatory and conventional T cells.</title>
        <authorList>
            <person name="Wild C.A."/>
            <person name="Bergmann C."/>
            <person name="Fritz G."/>
            <person name="Schuler P."/>
            <person name="Hoffmann T.K."/>
            <person name="Lotfi R."/>
            <person name="Westendorf A."/>
            <person name="Brandau S."/>
            <person name="Lang S."/>
        </authorList>
    </citation>
    <scope>FUNCTION</scope>
</reference>
<reference key="50">
    <citation type="journal article" date="2012" name="J. Exp. Med.">
        <title>HMGB1 promotes recruitment of inflammatory cells to damaged tissues by forming a complex with CXCL12 and signaling via CXCR4.</title>
        <authorList>
            <person name="Schiraldi M."/>
            <person name="Raucci A."/>
            <person name="Munoz L.M."/>
            <person name="Livoti E."/>
            <person name="Celona B."/>
            <person name="Venereau E."/>
            <person name="Apuzzo T."/>
            <person name="De Marchis F."/>
            <person name="Pedotti M."/>
            <person name="Bachi A."/>
            <person name="Thelen M."/>
            <person name="Varani L."/>
            <person name="Mellado M."/>
            <person name="Proudfoot A."/>
            <person name="Bianchi M.E."/>
            <person name="Uguccioni M."/>
        </authorList>
    </citation>
    <scope>FUNCTION</scope>
    <scope>INTERACTION WITH CXCL12</scope>
</reference>
<reference key="51">
    <citation type="journal article" date="2012" name="J. Exp. Med.">
        <title>Mutually exclusive redox forms of HMGB1 promote cell recruitment or proinflammatory cytokine release.</title>
        <authorList>
            <person name="Venereau E."/>
            <person name="Casalgrandi M."/>
            <person name="Schiraldi M."/>
            <person name="Antoine D.J."/>
            <person name="Cattaneo A."/>
            <person name="De Marchis F."/>
            <person name="Liu J."/>
            <person name="Antonelli A."/>
            <person name="Preti A."/>
            <person name="Raeli L."/>
            <person name="Shams S.S."/>
            <person name="Yang H."/>
            <person name="Varani L."/>
            <person name="Andersson U."/>
            <person name="Tracey K.J."/>
            <person name="Bachi A."/>
            <person name="Uguccioni M."/>
            <person name="Bianchi M.E."/>
        </authorList>
    </citation>
    <scope>REDOX FORMS</scope>
    <scope>SUBCELLULAR LOCATION</scope>
</reference>
<reference key="52">
    <citation type="journal article" date="2012" name="Nature">
        <title>Novel role of PKR in inflammasome activation and HMGB1 release.</title>
        <authorList>
            <person name="Lu B."/>
            <person name="Nakamura T."/>
            <person name="Inouye K."/>
            <person name="Li J."/>
            <person name="Tang Y."/>
            <person name="Lundbaeck P."/>
            <person name="Valdes-Ferrer S.I."/>
            <person name="Olofsson P.S."/>
            <person name="Kalb T."/>
            <person name="Roth J."/>
            <person name="Zou Y."/>
            <person name="Erlandsson-Harris H."/>
            <person name="Yang H."/>
            <person name="Ting J.P."/>
            <person name="Wang H."/>
            <person name="Andersson U."/>
            <person name="Antoine D.J."/>
            <person name="Chavan S.S."/>
            <person name="Hotamisligil G.S."/>
            <person name="Tracey K.J."/>
        </authorList>
    </citation>
    <scope>ACETYLATION</scope>
</reference>
<reference key="53">
    <citation type="journal article" date="2013" name="Eur. J. Cancer">
        <title>High mobility group box 1 released from necrotic cells enhances regrowth and metastasis of cancer cells that have survived chemotherapy.</title>
        <authorList>
            <person name="Luo Y."/>
            <person name="Chihara Y."/>
            <person name="Fujimoto K."/>
            <person name="Sasahira T."/>
            <person name="Kuwada M."/>
            <person name="Fujiwara R."/>
            <person name="Fujii K."/>
            <person name="Ohmori H."/>
            <person name="Kuniyasu H."/>
        </authorList>
    </citation>
    <scope>INVOLVEMENT IN CANCER THERAPY</scope>
</reference>
<reference key="54">
    <citation type="journal article" date="2013" name="Front. Immunol.">
        <title>HMGB1: The central cytokine for all lymphoid cells.</title>
        <authorList>
            <person name="Li G."/>
            <person name="Liang X."/>
            <person name="Lotze M.T."/>
        </authorList>
    </citation>
    <scope>REVIEW ON FUNCTION RELATED TO ADAPTIVE IMMUNITY</scope>
</reference>
<reference key="55">
    <citation type="journal article" date="2013" name="J. Immunol.">
        <title>Chaperone-like activity of high-mobility group box 1 protein and its role in reducing the formation of polyglutamine aggregates.</title>
        <authorList>
            <person name="Min H.J."/>
            <person name="Ko E.A."/>
            <person name="Wu J."/>
            <person name="Kim E.S."/>
            <person name="Kwon M.K."/>
            <person name="Kwak M.S."/>
            <person name="Choi J.E."/>
            <person name="Lee J.E."/>
            <person name="Shin J.S."/>
        </authorList>
    </citation>
    <scope>FUNCTION</scope>
    <scope>INTERACTION WITH HTT</scope>
</reference>
<reference key="56">
    <citation type="journal article" date="2013" name="J. Leukoc. Biol.">
        <title>The many faces of HMGB1: molecular structure-functional activity in inflammation, apoptosis, and chemotaxis.</title>
        <authorList>
            <person name="Yang H."/>
            <person name="Antoine D.J."/>
            <person name="Andersson U."/>
            <person name="Tracey K.J."/>
        </authorList>
    </citation>
    <scope>REVIEW ON FUNCTION RELATED TO INFLAMMATION</scope>
</reference>
<reference key="57">
    <citation type="journal article" date="2013" name="J. Proteome Res.">
        <title>Toward a comprehensive characterization of a human cancer cell phosphoproteome.</title>
        <authorList>
            <person name="Zhou H."/>
            <person name="Di Palma S."/>
            <person name="Preisinger C."/>
            <person name="Peng M."/>
            <person name="Polat A.N."/>
            <person name="Heck A.J."/>
            <person name="Mohammed S."/>
        </authorList>
    </citation>
    <scope>PHOSPHORYLATION [LARGE SCALE ANALYSIS] AT SER-35</scope>
    <scope>IDENTIFICATION BY MASS SPECTROMETRY [LARGE SCALE ANALYSIS]</scope>
    <source>
        <tissue>Cervix carcinoma</tissue>
        <tissue>Erythroleukemia</tissue>
    </source>
</reference>
<reference key="58">
    <citation type="journal article" date="2013" name="Semin. Cancer Biol.">
        <title>Menage a Trois in stress: DAMPs, redox and autophagy.</title>
        <authorList>
            <person name="Li G."/>
            <person name="Tang D."/>
            <person name="Lotze M.T."/>
        </authorList>
    </citation>
    <scope>REVIEW</scope>
</reference>
<reference key="59">
    <citation type="journal article" date="2014" name="Biochem. Biophys. Res. Commun.">
        <title>HMGB1-DNA complex-induced autophagy limits AIM2 inflammasome activation through RAGE.</title>
        <authorList>
            <person name="Liu L."/>
            <person name="Yang M."/>
            <person name="Kang R."/>
            <person name="Dai Y."/>
            <person name="Yu Y."/>
            <person name="Gao F."/>
            <person name="Wang H."/>
            <person name="Sun X."/>
            <person name="Li X."/>
            <person name="Li J."/>
            <person name="Wang H."/>
            <person name="Cao L."/>
            <person name="Tang D."/>
        </authorList>
    </citation>
    <scope>FUNCTION</scope>
</reference>
<reference key="60">
    <citation type="journal article" date="2014" name="J. Biol. Chem.">
        <title>An immunogenic peptide in the A-box of HMGB1 protein reverses apoptosis-induced tolerance through RAGE receptor.</title>
        <authorList>
            <person name="LeBlanc P.M."/>
            <person name="Doggett T.A."/>
            <person name="Choi J."/>
            <person name="Hancock M.A."/>
            <person name="Durocher Y."/>
            <person name="Frank F."/>
            <person name="Nagar B."/>
            <person name="Ferguson T.A."/>
            <person name="Saleh M."/>
        </authorList>
    </citation>
    <scope>FUNCTION</scope>
    <scope>MUTAGENESIS OF ASP-67</scope>
    <scope>INTERACTION WITH AGER</scope>
    <scope>DOMAIN</scope>
    <scope>PROTEOLYTIC CLEAVAGE</scope>
</reference>
<reference key="61">
    <citation type="journal article" date="2014" name="J. Proteomics">
        <title>An enzyme assisted RP-RPLC approach for in-depth analysis of human liver phosphoproteome.</title>
        <authorList>
            <person name="Bian Y."/>
            <person name="Song C."/>
            <person name="Cheng K."/>
            <person name="Dong M."/>
            <person name="Wang F."/>
            <person name="Huang J."/>
            <person name="Sun D."/>
            <person name="Wang L."/>
            <person name="Ye M."/>
            <person name="Zou H."/>
        </authorList>
    </citation>
    <scope>IDENTIFICATION BY MASS SPECTROMETRY [LARGE SCALE ANALYSIS]</scope>
    <source>
        <tissue>Liver</tissue>
    </source>
</reference>
<reference key="62">
    <citation type="journal article" date="2014" name="Mol. Med.">
        <title>A systematic nomenclature for the redox states of high mobility group box (HMGB) proteins.</title>
        <authorList>
            <person name="Antoine D.J."/>
            <person name="Harris H.E."/>
            <person name="Andersson U."/>
            <person name="Tracey K.J."/>
            <person name="Bianchi M.E."/>
        </authorList>
    </citation>
    <scope>NOMENCLATURE OF REDOX FORMS</scope>
</reference>
<reference key="63">
    <citation type="journal article" date="2014" name="Pharmacol. Ther.">
        <title>An overview on HMGB1 inhibitors as potential therapeutic agents in HMGB1-related pathologies.</title>
        <authorList>
            <person name="Musumeci D."/>
            <person name="Roviello G.N."/>
            <person name="Montesarchio D."/>
        </authorList>
    </citation>
    <scope>REVIEW ON INVOLVEMENT IN DISEASES AND THERAPEUTIC TARGET</scope>
</reference>
<reference key="64">
    <citation type="journal article" date="2014" name="PLoS ONE">
        <title>Role of high mobility group box 1 (HMGB1) in SCA17 pathogenesis.</title>
        <authorList>
            <person name="Lee L.C."/>
            <person name="Chen C.M."/>
            <person name="Wang P.R."/>
            <person name="Su M.T."/>
            <person name="Lee-Chen G.J."/>
            <person name="Chang C.Y."/>
        </authorList>
    </citation>
    <scope>FUNCTION</scope>
</reference>
<reference key="65">
    <citation type="journal article" date="2014" name="Yonsei Med. J.">
        <title>The role of high mobility group box 1 in innate immunity.</title>
        <authorList>
            <person name="Lee S.A."/>
            <person name="Kwak M.S."/>
            <person name="Kim S."/>
            <person name="Shin J.S."/>
        </authorList>
    </citation>
    <scope>REVIEW ON FUNCTION RELATED TO INNATE IMMUNITY</scope>
</reference>
<reference key="66">
    <citation type="journal article" date="2015" name="J. Immunol. Res.">
        <title>HMGB1 promotes systemic lupus erythematosus by enhancing macrophage inflammatory response.</title>
        <authorList>
            <person name="Lu M."/>
            <person name="Yu S."/>
            <person name="Xu W."/>
            <person name="Gao B."/>
            <person name="Xiong S."/>
        </authorList>
    </citation>
    <scope>INVOLVEMENT AUTOIMMUNE DISEASES</scope>
</reference>
<reference key="67">
    <citation type="journal article" date="2015" name="J. Innate Immun.">
        <title>HMGB1 binds to lipoteichoic acid and enhances TNF-alpha and IL-6 production through HMGB1-mediated transfer of lipoteichoic acid to CD14 and TLR2.</title>
        <authorList>
            <person name="Kwak M.S."/>
            <person name="Lim M."/>
            <person name="Lee Y.J."/>
            <person name="Lee H.S."/>
            <person name="Kim Y.H."/>
            <person name="Youn J.H."/>
            <person name="Choi J.E."/>
            <person name="Shin J.S."/>
        </authorList>
    </citation>
    <scope>FUNCTION</scope>
</reference>
<reference key="68">
    <citation type="journal article" date="2015" name="Proteomics">
        <title>N-terminome analysis of the human mitochondrial proteome.</title>
        <authorList>
            <person name="Vaca Jacome A.S."/>
            <person name="Rabilloud T."/>
            <person name="Schaeffer-Reiss C."/>
            <person name="Rompais M."/>
            <person name="Ayoub D."/>
            <person name="Lane L."/>
            <person name="Bairoch A."/>
            <person name="Van Dorsselaer A."/>
            <person name="Carapito C."/>
        </authorList>
    </citation>
    <scope>IDENTIFICATION BY MASS SPECTROMETRY [LARGE SCALE ANALYSIS]</scope>
</reference>
<reference key="69">
    <citation type="journal article" date="2016" name="Nature">
        <title>A core viral protein binds host nucleosomes to sequester immune danger signals.</title>
        <authorList>
            <person name="Avgousti D.C."/>
            <person name="Herrmann C."/>
            <person name="Kulej K."/>
            <person name="Pancholi N.J."/>
            <person name="Sekulic N."/>
            <person name="Petrescu J."/>
            <person name="Molden R.C."/>
            <person name="Blumenthal D."/>
            <person name="Paris A.J."/>
            <person name="Reyes E.D."/>
            <person name="Ostapchuk P."/>
            <person name="Hearing P."/>
            <person name="Seeholzer S.H."/>
            <person name="Worthen G.S."/>
            <person name="Black B.E."/>
            <person name="Garcia B.A."/>
            <person name="Weitzman M.D."/>
        </authorList>
    </citation>
    <scope>FUNCTION</scope>
    <scope>INTERACTION WITH ADENOVIRUS PROTEIN PVII (MICROBIAL INFECTION)</scope>
    <scope>SUBCELLULAR LOCATION</scope>
</reference>
<reference key="70">
    <citation type="journal article" date="2017" name="Mol. Cell">
        <title>Serine ADP-ribosylation depends on HPF1.</title>
        <authorList>
            <person name="Bonfiglio J.J."/>
            <person name="Fontana P."/>
            <person name="Zhang Q."/>
            <person name="Colby T."/>
            <person name="Gibbs-Seymour I."/>
            <person name="Atanassov I."/>
            <person name="Bartlett E."/>
            <person name="Zaja R."/>
            <person name="Ahel I."/>
            <person name="Matic I."/>
        </authorList>
    </citation>
    <scope>ADP-RIBOSYLATION AT SER-181</scope>
</reference>
<reference key="71">
    <citation type="journal article" date="2018" name="J. Biol. Chem.">
        <title>The proinflammatory protein HMGB1 is a substrate of transglutaminase-2 and forms high-molecular weight complexes with autoantigens.</title>
        <authorList>
            <person name="Willis W.L."/>
            <person name="Wang L."/>
            <person name="Wada T.T."/>
            <person name="Gardner M."/>
            <person name="Abdouni O."/>
            <person name="Hampton J."/>
            <person name="Valiente G."/>
            <person name="Young N."/>
            <person name="Ardoin S."/>
            <person name="Agarwal S."/>
            <person name="Freitas M.A."/>
            <person name="Wu L.C."/>
            <person name="Jarjour W.N."/>
        </authorList>
    </citation>
    <scope>SUBCELLULAR LOCATION</scope>
    <scope>TRANSGLUTAMINATION AT LYS-28; LYS-43; LYS-44; LYS-68; LYS-177; LYS-180; LYS-182; LYS-183 AND LYS-184</scope>
</reference>
<reference key="72">
    <citation type="journal article" date="2021" name="Cell">
        <title>Genome-wide CRISPR Screens Reveal Host Factors Critical for SARS-CoV-2 Infection.</title>
        <authorList>
            <person name="Wei J."/>
            <person name="Alfajaro M.M."/>
            <person name="DeWeirdt P.C."/>
            <person name="Hanna R.E."/>
            <person name="Lu-Culligan W.J."/>
            <person name="Cai W.L."/>
            <person name="Strine M.S."/>
            <person name="Zhang S.M."/>
            <person name="Graziano V.R."/>
            <person name="Schmitz C.O."/>
            <person name="Chen J.S."/>
            <person name="Mankowski M.C."/>
            <person name="Filler R.B."/>
            <person name="Ravindra N.G."/>
            <person name="Gasque V."/>
            <person name="de Miguel F.J."/>
            <person name="Patil A."/>
            <person name="Chen H."/>
            <person name="Oguntuyo K.Y."/>
            <person name="Abriola L."/>
            <person name="Surovtseva Y.V."/>
            <person name="Orchard R.C."/>
            <person name="Lee B."/>
            <person name="Lindenbach B.D."/>
            <person name="Politi K."/>
            <person name="van Dijk D."/>
            <person name="Kadoch C."/>
            <person name="Simon M.D."/>
            <person name="Yan Q."/>
            <person name="Doench J.G."/>
            <person name="Wilen C.B."/>
        </authorList>
    </citation>
    <scope>FUNCTION</scope>
    <scope>FUNCTION (MICROBIAL INFECTION)</scope>
    <scope>SUBCELLULAR LOCATION</scope>
    <scope>INDUCTION BY SARS-COV2 (MICROBIAL INFECTION)</scope>
</reference>
<reference key="73">
    <citation type="journal article" date="2021" name="Cell. Death. Discov.">
        <title>LPS-induced macrophage HMGB1-loaded extracellular vesicles trigger hepatocyte pyroptosis by activating the NLRP3 inflammasome.</title>
        <authorList>
            <person name="Wang G."/>
            <person name="Jin S."/>
            <person name="Huang W."/>
            <person name="Li Y."/>
            <person name="Wang J."/>
            <person name="Ling X."/>
            <person name="Huang Y."/>
            <person name="Hu Y."/>
            <person name="Li C."/>
            <person name="Meng Y."/>
            <person name="Li X."/>
        </authorList>
    </citation>
    <scope>FUNCTION</scope>
    <scope>INTERACTION WITH AGER</scope>
</reference>
<reference key="74">
    <citation type="journal article" date="2022" name="Virology">
        <title>The danger molecule HMGB1 cooperates with the NLRP3 inflammasome to sustain expression of the EBV lytic switch protein in Burkitt lymphoma cells.</title>
        <authorList>
            <person name="Reinhart N.M."/>
            <person name="Akinyemi I.A."/>
            <person name="Frey T.R."/>
            <person name="Xu H."/>
            <person name="Agudelo C."/>
            <person name="Brathwaite J."/>
            <person name="Burton E.M."/>
            <person name="Burgula S."/>
            <person name="McIntosh M.T."/>
            <person name="Bhaduri-McIntosh S."/>
        </authorList>
    </citation>
    <scope>FUNCTION (MICROBIAL INFECTION)</scope>
</reference>
<reference key="75">
    <citation type="journal article" date="2022" name="Mol. Med.">
        <title>USP13 regulates HMGB1 stability and secretion through its deubiquitinase activity.</title>
        <authorList>
            <person name="Shin J."/>
            <person name="Kim Y.H."/>
            <person name="Lee B."/>
            <person name="Chang J.H."/>
            <person name="Choi H.Y."/>
            <person name="Lee H."/>
            <person name="Song K.C."/>
            <person name="Kwak M.S."/>
            <person name="Choi J.E."/>
            <person name="Shin J.S."/>
        </authorList>
    </citation>
    <scope>FUNCTION</scope>
    <scope>SUBCELLULAR LOCATION</scope>
</reference>
<reference key="76">
    <citation type="journal article" date="2022" name="Virus Res.">
        <title>High-mobility group box 1 protein promotes dengue virus replication by interacting with untranslated regions of viral genome.</title>
        <authorList>
            <person name="Chaudhary N."/>
            <person name="Srivastava S."/>
            <person name="Dave U."/>
            <person name="Ojha A."/>
            <person name="Guchhait P."/>
            <person name="Chandele A."/>
            <person name="Patel A.K."/>
        </authorList>
    </citation>
    <scope>FUNCTION (MICROBIAL INFECTION)</scope>
    <scope>SUBCELLULAR LOCATION</scope>
</reference>
<reference key="77">
    <citation type="journal article" date="2022" name="Autophagy">
        <title>SARS-CoV-2 ORF3a induces RETREG1/FAM134B-dependent reticulophagy and triggers sequential ER stress and inflammatory responses during SARS-CoV-2 infection.</title>
        <authorList>
            <person name="Zhang X."/>
            <person name="Yang Z."/>
            <person name="Pan T."/>
            <person name="Long X."/>
            <person name="Sun Q."/>
            <person name="Wang P.H."/>
            <person name="Li X."/>
            <person name="Kuang E."/>
        </authorList>
    </citation>
    <scope>FUNCTION (MICROBIAL INFECTION)</scope>
    <scope>INTERACTION WITH SARS-COV-2 ORF3A</scope>
    <scope>SUBCELLULAR LOCATION (MICROBIAL INFECTION)</scope>
</reference>
<reference key="78">
    <citation type="submission" date="2008-02" db="PDB data bank">
        <title>Solution structure of the tandem HMG box domain from human high mobility group protein B1.</title>
        <authorList>
            <consortium name="RIKEN structural genomics initiative (RSGI)"/>
        </authorList>
    </citation>
    <scope>STRUCTURE BY NMR OF 1-166</scope>
</reference>
<reference key="79">
    <citation type="journal article" date="2012" name="Structure">
        <title>HMGB1-facilitated p53 DNA binding occurs via HMG-Box/p53 transactivation domain interaction, regulated by the acidic tail.</title>
        <authorList>
            <person name="Rowell J.P."/>
            <person name="Simpson K.L."/>
            <person name="Stott K."/>
            <person name="Watson M."/>
            <person name="Thomas J.O."/>
        </authorList>
    </citation>
    <scope>STRUCTURE BY NMR OF 2-84 IN COMPLEX WITH TP53</scope>
    <scope>FUNCTION</scope>
    <scope>DOMAIN</scope>
</reference>
<reference key="80">
    <citation type="journal article" date="2013" name="Biochem. Biophys. Res. Commun.">
        <title>Redox-sensitive structural change in the A-domain of HMGB1 and its implication for the binding to cisplatin modified DNA.</title>
        <authorList>
            <person name="Wang J."/>
            <person name="Tochio N."/>
            <person name="Takeuchi A."/>
            <person name="Uewaki J."/>
            <person name="Kobayashi N."/>
            <person name="Tate S."/>
        </authorList>
    </citation>
    <scope>STRUCTURE BY NMR OF 1-84</scope>
</reference>